<accession>P03928</accession>
<accession>Q34771</accession>
<proteinExistence type="evidence at protein level"/>
<comment type="function">
    <text evidence="2 7 10">Subunit 8, of the mitochondrial membrane ATP synthase complex (F(1)F(0) ATP synthase or Complex V) that produces ATP from ADP in the presence of a proton gradient across the membrane which is generated by electron transport complexes of the respiratory chain (PubMed:37244256). ATP synthase complex consist of a soluble F(1) head domain - the catalytic core - and a membrane F(1) domain - the membrane proton channel (PubMed:37244256). These two domains are linked by a central stalk rotating inside the F(1) region and a stationary peripheral stalk (PubMed:37244256). During catalysis, ATP synthesis in the catalytic domain of F(1) is coupled via a rotary mechanism of the central stalk subunits to proton translocation (Probable). In vivo, can only synthesize ATP although its ATP hydrolase activity can be activated artificially in vitro (By similarity). Part of the complex F(0) domain (PubMed:37244256).</text>
</comment>
<comment type="subunit">
    <text evidence="6 7">Component of the ATP synthase complex composed at least of ATP5F1A/subunit alpha, ATP5F1B/subunit beta, ATP5MC1/subunit c (homooctomer), MT-ATP6/subunit a, MT-ATP8/subunit 8, ATP5ME/subunit e, ATP5MF/subunit f, ATP5MG/subunit g, ATP5MK/subunit k, ATP5MJ/subunit j, ATP5F1C/subunit gamma, ATP5F1D/subunit delta, ATP5F1E/subunit epsilon, ATP5PF/subunit F6, ATP5PB/subunit b, ATP5PD/subunit d, ATP5PO/subunit OSCP (PubMed:37244256). ATP synthase complex consists of a soluble F(1) head domain (subunits alpha(3) and beta(3)) - the catalytic core - and a membrane F(0) domain - the membrane proton channel (subunits c, a, 8, e, f, g, k and j) (PubMed:37244256). These two domains are linked by a central stalk (subunits gamma, delta, and epsilon) rotating inside the F1 region and a stationary peripheral stalk (subunits F6, b, d, and OSCP) (PubMed:37244256). Interacts with PRICKLE3 (PubMed:32516135).</text>
</comment>
<comment type="subcellular location">
    <subcellularLocation>
        <location>Mitochondrion membrane</location>
        <topology>Single-pass membrane protein</topology>
    </subcellularLocation>
</comment>
<comment type="disease" evidence="5">
    <disease id="DI-03713">
        <name>Mitochondrial complex V deficiency, mitochondrial 2</name>
        <acronym>MC5DM2</acronym>
        <description>A mitochondrial disorder with heterogeneous clinical manifestations including neuropathy, ataxia, hypertrophic cardiomyopathy. Hypertrophic cardiomyopathy can present with negligible to extreme hypertrophy, minimal to extensive fibrosis and myocyte disarray, absent to severe left ventricular outflow tract obstruction, and distinct septal contours/morphologies with extremely varying clinical course.</description>
        <dbReference type="MIM" id="516070"/>
    </disease>
    <text>The disease is caused by variants affecting the gene represented in this entry.</text>
</comment>
<comment type="disease" evidence="5">
    <disease id="DI-04888">
        <name>Cardiomyopathy, infantile hypertrophic</name>
        <acronym>CMHI</acronym>
        <description>An infantile form of hypertrophic cardiomyopathy, a heart disorder characterized by ventricular hypertrophy, which is usually asymmetric and often involves the interventricular septum. The symptoms include dyspnea, syncope, collapse, palpitations, and chest pain. They can be readily provoked by exercise. The disorder has inter- and intrafamilial variability ranging from benign to malignant forms with high risk of cardiac failure and sudden cardiac death.</description>
        <dbReference type="MIM" id="500006"/>
    </disease>
    <text>The disease is caused by variants affecting distinct genetic loci, including the gene represented in this entry.</text>
</comment>
<comment type="similarity">
    <text evidence="9">Belongs to the ATPase protein 8 family.</text>
</comment>
<feature type="chain" id="PRO_0000195536" description="ATP synthase F(0) complex subunit 8">
    <location>
        <begin position="1"/>
        <end position="68"/>
    </location>
</feature>
<feature type="transmembrane region" description="Helical" evidence="3 7 19">
    <location>
        <begin position="8"/>
        <end position="21"/>
    </location>
</feature>
<feature type="modified residue" description="N6-acetyllysine; alternate" evidence="1">
    <location>
        <position position="54"/>
    </location>
</feature>
<feature type="modified residue" description="N6-succinyllysine; alternate" evidence="1">
    <location>
        <position position="54"/>
    </location>
</feature>
<feature type="modified residue" description="N6-acetyllysine" evidence="1">
    <location>
        <position position="57"/>
    </location>
</feature>
<feature type="sequence variant" id="VAR_008563" description="In dbSNP:rs1603221470." evidence="4">
    <original>L</original>
    <variation>P</variation>
    <location>
        <position position="17"/>
    </location>
</feature>
<feature type="sequence variant" id="VAR_008564" evidence="4">
    <original>F</original>
    <variation>S</variation>
    <location>
        <position position="21"/>
    </location>
</feature>
<feature type="sequence variant" id="VAR_008565" description="In dbSNP:rs879056797." evidence="8">
    <original>M</original>
    <variation>T</variation>
    <location>
        <position position="28"/>
    </location>
</feature>
<feature type="sequence variant" id="VAR_069527" description="In MC5DM2 and CMHI; dbSNP:rs387906422." evidence="5">
    <original>W</original>
    <variation>R</variation>
    <location>
        <position position="55"/>
    </location>
</feature>
<feature type="sequence conflict" description="In Ref. 3; AAP90483." evidence="9" ref="3">
    <original>P</original>
    <variation>S</variation>
    <location>
        <position position="10"/>
    </location>
</feature>
<feature type="sequence conflict" description="In Ref. 2; BAA07294." evidence="9" ref="2">
    <original>N</original>
    <variation>S</variation>
    <location>
        <position position="32"/>
    </location>
</feature>
<feature type="helix" evidence="20">
    <location>
        <begin position="2"/>
        <end position="4"/>
    </location>
</feature>
<feature type="helix" evidence="21">
    <location>
        <begin position="6"/>
        <end position="8"/>
    </location>
</feature>
<feature type="helix" evidence="20">
    <location>
        <begin position="9"/>
        <end position="20"/>
    </location>
</feature>
<feature type="helix" evidence="20">
    <location>
        <begin position="23"/>
        <end position="28"/>
    </location>
</feature>
<sequence>MPQLNTTVWPTMITPMLLTLFLITQLKMLNTNYHLPPSPKPMKMKNYNKPWEPKWTKICSLHSLPPQS</sequence>
<dbReference type="EMBL" id="J01415">
    <property type="protein sequence ID" value="AAB58947.1"/>
    <property type="molecule type" value="Genomic_DNA"/>
</dbReference>
<dbReference type="EMBL" id="V00662">
    <property type="protein sequence ID" value="CAA24030.1"/>
    <property type="molecule type" value="Genomic_DNA"/>
</dbReference>
<dbReference type="EMBL" id="D38112">
    <property type="protein sequence ID" value="BAA07294.1"/>
    <property type="molecule type" value="Genomic_DNA"/>
</dbReference>
<dbReference type="EMBL" id="AY339402">
    <property type="protein sequence ID" value="AAP89040.1"/>
    <property type="molecule type" value="Genomic_DNA"/>
</dbReference>
<dbReference type="EMBL" id="AY339403">
    <property type="protein sequence ID" value="AAP89053.1"/>
    <property type="molecule type" value="Genomic_DNA"/>
</dbReference>
<dbReference type="EMBL" id="AY339404">
    <property type="protein sequence ID" value="AAP89066.1"/>
    <property type="molecule type" value="Genomic_DNA"/>
</dbReference>
<dbReference type="EMBL" id="AY339405">
    <property type="protein sequence ID" value="AAP89079.1"/>
    <property type="molecule type" value="Genomic_DNA"/>
</dbReference>
<dbReference type="EMBL" id="AY339406">
    <property type="protein sequence ID" value="AAP89092.1"/>
    <property type="molecule type" value="Genomic_DNA"/>
</dbReference>
<dbReference type="EMBL" id="AY339407">
    <property type="protein sequence ID" value="AAP89105.1"/>
    <property type="molecule type" value="Genomic_DNA"/>
</dbReference>
<dbReference type="EMBL" id="AY339408">
    <property type="protein sequence ID" value="AAP89118.1"/>
    <property type="molecule type" value="Genomic_DNA"/>
</dbReference>
<dbReference type="EMBL" id="AY339409">
    <property type="protein sequence ID" value="AAP89131.1"/>
    <property type="molecule type" value="Genomic_DNA"/>
</dbReference>
<dbReference type="EMBL" id="AY339410">
    <property type="protein sequence ID" value="AAP89144.1"/>
    <property type="molecule type" value="Genomic_DNA"/>
</dbReference>
<dbReference type="EMBL" id="AY339411">
    <property type="protein sequence ID" value="AAP89157.1"/>
    <property type="molecule type" value="Genomic_DNA"/>
</dbReference>
<dbReference type="EMBL" id="AY339412">
    <property type="protein sequence ID" value="AAP89170.1"/>
    <property type="molecule type" value="Genomic_DNA"/>
</dbReference>
<dbReference type="EMBL" id="AY339413">
    <property type="protein sequence ID" value="AAP89183.1"/>
    <property type="molecule type" value="Genomic_DNA"/>
</dbReference>
<dbReference type="EMBL" id="AY339414">
    <property type="protein sequence ID" value="AAP89196.1"/>
    <property type="molecule type" value="Genomic_DNA"/>
</dbReference>
<dbReference type="EMBL" id="AY339415">
    <property type="protein sequence ID" value="AAP89209.1"/>
    <property type="molecule type" value="Genomic_DNA"/>
</dbReference>
<dbReference type="EMBL" id="AY339416">
    <property type="protein sequence ID" value="AAP89222.1"/>
    <property type="molecule type" value="Genomic_DNA"/>
</dbReference>
<dbReference type="EMBL" id="AY339417">
    <property type="protein sequence ID" value="AAP89235.1"/>
    <property type="molecule type" value="Genomic_DNA"/>
</dbReference>
<dbReference type="EMBL" id="AY339418">
    <property type="protein sequence ID" value="AAP89248.1"/>
    <property type="molecule type" value="Genomic_DNA"/>
</dbReference>
<dbReference type="EMBL" id="AY339419">
    <property type="protein sequence ID" value="AAP89261.1"/>
    <property type="molecule type" value="Genomic_DNA"/>
</dbReference>
<dbReference type="EMBL" id="AY339420">
    <property type="protein sequence ID" value="AAP89274.1"/>
    <property type="molecule type" value="Genomic_DNA"/>
</dbReference>
<dbReference type="EMBL" id="AY339421">
    <property type="protein sequence ID" value="AAP89287.1"/>
    <property type="molecule type" value="Genomic_DNA"/>
</dbReference>
<dbReference type="EMBL" id="AY339422">
    <property type="protein sequence ID" value="AAP89300.1"/>
    <property type="molecule type" value="Genomic_DNA"/>
</dbReference>
<dbReference type="EMBL" id="AY339423">
    <property type="protein sequence ID" value="AAP89313.1"/>
    <property type="molecule type" value="Genomic_DNA"/>
</dbReference>
<dbReference type="EMBL" id="AY339424">
    <property type="protein sequence ID" value="AAP89326.1"/>
    <property type="molecule type" value="Genomic_DNA"/>
</dbReference>
<dbReference type="EMBL" id="AY339425">
    <property type="protein sequence ID" value="AAP89339.1"/>
    <property type="molecule type" value="Genomic_DNA"/>
</dbReference>
<dbReference type="EMBL" id="AY339426">
    <property type="protein sequence ID" value="AAP89352.1"/>
    <property type="molecule type" value="Genomic_DNA"/>
</dbReference>
<dbReference type="EMBL" id="AY339427">
    <property type="protein sequence ID" value="AAP89365.1"/>
    <property type="molecule type" value="Genomic_DNA"/>
</dbReference>
<dbReference type="EMBL" id="AY339428">
    <property type="protein sequence ID" value="AAP89378.1"/>
    <property type="molecule type" value="Genomic_DNA"/>
</dbReference>
<dbReference type="EMBL" id="AY339429">
    <property type="protein sequence ID" value="AAP89391.1"/>
    <property type="molecule type" value="Genomic_DNA"/>
</dbReference>
<dbReference type="EMBL" id="AY339430">
    <property type="protein sequence ID" value="AAP89404.1"/>
    <property type="molecule type" value="Genomic_DNA"/>
</dbReference>
<dbReference type="EMBL" id="AY339431">
    <property type="protein sequence ID" value="AAP89417.1"/>
    <property type="molecule type" value="Genomic_DNA"/>
</dbReference>
<dbReference type="EMBL" id="AY339432">
    <property type="protein sequence ID" value="AAP89430.1"/>
    <property type="molecule type" value="Genomic_DNA"/>
</dbReference>
<dbReference type="EMBL" id="AY339433">
    <property type="protein sequence ID" value="AAP89443.1"/>
    <property type="molecule type" value="Genomic_DNA"/>
</dbReference>
<dbReference type="EMBL" id="AY339434">
    <property type="protein sequence ID" value="AAP89456.1"/>
    <property type="molecule type" value="Genomic_DNA"/>
</dbReference>
<dbReference type="EMBL" id="AY339435">
    <property type="protein sequence ID" value="AAP89469.1"/>
    <property type="molecule type" value="Genomic_DNA"/>
</dbReference>
<dbReference type="EMBL" id="AY339436">
    <property type="protein sequence ID" value="AAP89482.1"/>
    <property type="molecule type" value="Genomic_DNA"/>
</dbReference>
<dbReference type="EMBL" id="AY339437">
    <property type="protein sequence ID" value="AAP89495.1"/>
    <property type="molecule type" value="Genomic_DNA"/>
</dbReference>
<dbReference type="EMBL" id="AY339438">
    <property type="protein sequence ID" value="AAP89508.1"/>
    <property type="molecule type" value="Genomic_DNA"/>
</dbReference>
<dbReference type="EMBL" id="AY339439">
    <property type="protein sequence ID" value="AAP89521.1"/>
    <property type="molecule type" value="Genomic_DNA"/>
</dbReference>
<dbReference type="EMBL" id="AY339440">
    <property type="protein sequence ID" value="AAP89534.1"/>
    <property type="molecule type" value="Genomic_DNA"/>
</dbReference>
<dbReference type="EMBL" id="AY339441">
    <property type="protein sequence ID" value="AAP89547.1"/>
    <property type="molecule type" value="Genomic_DNA"/>
</dbReference>
<dbReference type="EMBL" id="AY339442">
    <property type="protein sequence ID" value="AAP89560.1"/>
    <property type="molecule type" value="Genomic_DNA"/>
</dbReference>
<dbReference type="EMBL" id="AY339443">
    <property type="protein sequence ID" value="AAP89573.1"/>
    <property type="molecule type" value="Genomic_DNA"/>
</dbReference>
<dbReference type="EMBL" id="AY339444">
    <property type="protein sequence ID" value="AAP89586.1"/>
    <property type="molecule type" value="Genomic_DNA"/>
</dbReference>
<dbReference type="EMBL" id="AY339445">
    <property type="protein sequence ID" value="AAP89599.1"/>
    <property type="molecule type" value="Genomic_DNA"/>
</dbReference>
<dbReference type="EMBL" id="AY339446">
    <property type="protein sequence ID" value="AAP89612.1"/>
    <property type="molecule type" value="Genomic_DNA"/>
</dbReference>
<dbReference type="EMBL" id="AY339447">
    <property type="protein sequence ID" value="AAP89625.1"/>
    <property type="molecule type" value="Genomic_DNA"/>
</dbReference>
<dbReference type="EMBL" id="AY339448">
    <property type="protein sequence ID" value="AAP89638.1"/>
    <property type="molecule type" value="Genomic_DNA"/>
</dbReference>
<dbReference type="EMBL" id="AY339449">
    <property type="protein sequence ID" value="AAP89651.1"/>
    <property type="molecule type" value="Genomic_DNA"/>
</dbReference>
<dbReference type="EMBL" id="AY339450">
    <property type="protein sequence ID" value="AAP89664.1"/>
    <property type="molecule type" value="Genomic_DNA"/>
</dbReference>
<dbReference type="EMBL" id="AY339451">
    <property type="protein sequence ID" value="AAP89677.1"/>
    <property type="molecule type" value="Genomic_DNA"/>
</dbReference>
<dbReference type="EMBL" id="AY339452">
    <property type="protein sequence ID" value="AAP89690.1"/>
    <property type="molecule type" value="Genomic_DNA"/>
</dbReference>
<dbReference type="EMBL" id="AY339453">
    <property type="protein sequence ID" value="AAP89703.1"/>
    <property type="molecule type" value="Genomic_DNA"/>
</dbReference>
<dbReference type="EMBL" id="AY339454">
    <property type="protein sequence ID" value="AAP89716.1"/>
    <property type="molecule type" value="Genomic_DNA"/>
</dbReference>
<dbReference type="EMBL" id="AY339455">
    <property type="protein sequence ID" value="AAP89729.1"/>
    <property type="molecule type" value="Genomic_DNA"/>
</dbReference>
<dbReference type="EMBL" id="AY339456">
    <property type="protein sequence ID" value="AAP89742.1"/>
    <property type="molecule type" value="Genomic_DNA"/>
</dbReference>
<dbReference type="EMBL" id="AY339457">
    <property type="protein sequence ID" value="AAP89755.1"/>
    <property type="molecule type" value="Genomic_DNA"/>
</dbReference>
<dbReference type="EMBL" id="AY339458">
    <property type="protein sequence ID" value="AAP89768.1"/>
    <property type="molecule type" value="Genomic_DNA"/>
</dbReference>
<dbReference type="EMBL" id="AY339459">
    <property type="protein sequence ID" value="AAP89781.1"/>
    <property type="molecule type" value="Genomic_DNA"/>
</dbReference>
<dbReference type="EMBL" id="AY339460">
    <property type="protein sequence ID" value="AAP89794.1"/>
    <property type="molecule type" value="Genomic_DNA"/>
</dbReference>
<dbReference type="EMBL" id="AY339461">
    <property type="protein sequence ID" value="AAP89807.1"/>
    <property type="molecule type" value="Genomic_DNA"/>
</dbReference>
<dbReference type="EMBL" id="AY339462">
    <property type="protein sequence ID" value="AAP89820.1"/>
    <property type="molecule type" value="Genomic_DNA"/>
</dbReference>
<dbReference type="EMBL" id="AY339463">
    <property type="protein sequence ID" value="AAP89833.1"/>
    <property type="molecule type" value="Genomic_DNA"/>
</dbReference>
<dbReference type="EMBL" id="AY339464">
    <property type="protein sequence ID" value="AAP89846.1"/>
    <property type="molecule type" value="Genomic_DNA"/>
</dbReference>
<dbReference type="EMBL" id="AY339465">
    <property type="protein sequence ID" value="AAP89859.1"/>
    <property type="molecule type" value="Genomic_DNA"/>
</dbReference>
<dbReference type="EMBL" id="AY339466">
    <property type="protein sequence ID" value="AAP89872.1"/>
    <property type="molecule type" value="Genomic_DNA"/>
</dbReference>
<dbReference type="EMBL" id="AY339467">
    <property type="protein sequence ID" value="AAP89885.1"/>
    <property type="molecule type" value="Genomic_DNA"/>
</dbReference>
<dbReference type="EMBL" id="AY339468">
    <property type="protein sequence ID" value="AAP89898.1"/>
    <property type="molecule type" value="Genomic_DNA"/>
</dbReference>
<dbReference type="EMBL" id="AY339469">
    <property type="protein sequence ID" value="AAP89911.1"/>
    <property type="molecule type" value="Genomic_DNA"/>
</dbReference>
<dbReference type="EMBL" id="AY339470">
    <property type="protein sequence ID" value="AAP89924.1"/>
    <property type="molecule type" value="Genomic_DNA"/>
</dbReference>
<dbReference type="EMBL" id="AY339471">
    <property type="protein sequence ID" value="AAP89937.1"/>
    <property type="molecule type" value="Genomic_DNA"/>
</dbReference>
<dbReference type="EMBL" id="AY339472">
    <property type="protein sequence ID" value="AAP89950.1"/>
    <property type="molecule type" value="Genomic_DNA"/>
</dbReference>
<dbReference type="EMBL" id="AY339473">
    <property type="protein sequence ID" value="AAP89963.1"/>
    <property type="molecule type" value="Genomic_DNA"/>
</dbReference>
<dbReference type="EMBL" id="AY339474">
    <property type="protein sequence ID" value="AAP89976.1"/>
    <property type="molecule type" value="Genomic_DNA"/>
</dbReference>
<dbReference type="EMBL" id="AY339475">
    <property type="protein sequence ID" value="AAP89989.1"/>
    <property type="molecule type" value="Genomic_DNA"/>
</dbReference>
<dbReference type="EMBL" id="AY339476">
    <property type="protein sequence ID" value="AAP90002.1"/>
    <property type="molecule type" value="Genomic_DNA"/>
</dbReference>
<dbReference type="EMBL" id="AY339477">
    <property type="protein sequence ID" value="AAP90015.1"/>
    <property type="molecule type" value="Genomic_DNA"/>
</dbReference>
<dbReference type="EMBL" id="AY339478">
    <property type="protein sequence ID" value="AAP90028.1"/>
    <property type="molecule type" value="Genomic_DNA"/>
</dbReference>
<dbReference type="EMBL" id="AY339479">
    <property type="protein sequence ID" value="AAP90041.1"/>
    <property type="molecule type" value="Genomic_DNA"/>
</dbReference>
<dbReference type="EMBL" id="AY339480">
    <property type="protein sequence ID" value="AAP90054.1"/>
    <property type="molecule type" value="Genomic_DNA"/>
</dbReference>
<dbReference type="EMBL" id="AY339481">
    <property type="protein sequence ID" value="AAP90067.1"/>
    <property type="molecule type" value="Genomic_DNA"/>
</dbReference>
<dbReference type="EMBL" id="AY339482">
    <property type="protein sequence ID" value="AAP90080.1"/>
    <property type="molecule type" value="Genomic_DNA"/>
</dbReference>
<dbReference type="EMBL" id="AY339483">
    <property type="protein sequence ID" value="AAP90093.1"/>
    <property type="molecule type" value="Genomic_DNA"/>
</dbReference>
<dbReference type="EMBL" id="AY339484">
    <property type="protein sequence ID" value="AAP90106.1"/>
    <property type="molecule type" value="Genomic_DNA"/>
</dbReference>
<dbReference type="EMBL" id="AY339485">
    <property type="protein sequence ID" value="AAP90119.1"/>
    <property type="molecule type" value="Genomic_DNA"/>
</dbReference>
<dbReference type="EMBL" id="AY339486">
    <property type="protein sequence ID" value="AAP90132.1"/>
    <property type="molecule type" value="Genomic_DNA"/>
</dbReference>
<dbReference type="EMBL" id="AY339487">
    <property type="protein sequence ID" value="AAP90145.1"/>
    <property type="molecule type" value="Genomic_DNA"/>
</dbReference>
<dbReference type="EMBL" id="AY339488">
    <property type="protein sequence ID" value="AAP90158.1"/>
    <property type="molecule type" value="Genomic_DNA"/>
</dbReference>
<dbReference type="EMBL" id="AY339489">
    <property type="protein sequence ID" value="AAP90171.1"/>
    <property type="molecule type" value="Genomic_DNA"/>
</dbReference>
<dbReference type="EMBL" id="AY339490">
    <property type="protein sequence ID" value="AAP90184.1"/>
    <property type="molecule type" value="Genomic_DNA"/>
</dbReference>
<dbReference type="EMBL" id="AY339491">
    <property type="protein sequence ID" value="AAP90197.1"/>
    <property type="molecule type" value="Genomic_DNA"/>
</dbReference>
<dbReference type="EMBL" id="AY339492">
    <property type="protein sequence ID" value="AAP90210.1"/>
    <property type="molecule type" value="Genomic_DNA"/>
</dbReference>
<dbReference type="EMBL" id="AY339493">
    <property type="protein sequence ID" value="AAP90223.1"/>
    <property type="molecule type" value="Genomic_DNA"/>
</dbReference>
<dbReference type="EMBL" id="AY339494">
    <property type="protein sequence ID" value="AAP90236.1"/>
    <property type="molecule type" value="Genomic_DNA"/>
</dbReference>
<dbReference type="EMBL" id="AY339495">
    <property type="protein sequence ID" value="AAP90249.1"/>
    <property type="molecule type" value="Genomic_DNA"/>
</dbReference>
<dbReference type="EMBL" id="AY339496">
    <property type="protein sequence ID" value="AAP90262.1"/>
    <property type="molecule type" value="Genomic_DNA"/>
</dbReference>
<dbReference type="EMBL" id="AY339497">
    <property type="protein sequence ID" value="AAP90275.1"/>
    <property type="molecule type" value="Genomic_DNA"/>
</dbReference>
<dbReference type="EMBL" id="AY339498">
    <property type="protein sequence ID" value="AAP90288.1"/>
    <property type="molecule type" value="Genomic_DNA"/>
</dbReference>
<dbReference type="EMBL" id="AY339499">
    <property type="protein sequence ID" value="AAP90301.1"/>
    <property type="molecule type" value="Genomic_DNA"/>
</dbReference>
<dbReference type="EMBL" id="AY339500">
    <property type="protein sequence ID" value="AAP90314.1"/>
    <property type="molecule type" value="Genomic_DNA"/>
</dbReference>
<dbReference type="EMBL" id="AY339501">
    <property type="protein sequence ID" value="AAP90327.1"/>
    <property type="molecule type" value="Genomic_DNA"/>
</dbReference>
<dbReference type="EMBL" id="AY339502">
    <property type="protein sequence ID" value="AAP90340.1"/>
    <property type="molecule type" value="Genomic_DNA"/>
</dbReference>
<dbReference type="EMBL" id="AY339503">
    <property type="protein sequence ID" value="AAP90353.1"/>
    <property type="molecule type" value="Genomic_DNA"/>
</dbReference>
<dbReference type="EMBL" id="AY339504">
    <property type="protein sequence ID" value="AAP90366.1"/>
    <property type="molecule type" value="Genomic_DNA"/>
</dbReference>
<dbReference type="EMBL" id="AY339505">
    <property type="protein sequence ID" value="AAP90379.1"/>
    <property type="molecule type" value="Genomic_DNA"/>
</dbReference>
<dbReference type="EMBL" id="AY339506">
    <property type="protein sequence ID" value="AAP90392.1"/>
    <property type="molecule type" value="Genomic_DNA"/>
</dbReference>
<dbReference type="EMBL" id="AY339507">
    <property type="protein sequence ID" value="AAP90405.1"/>
    <property type="molecule type" value="Genomic_DNA"/>
</dbReference>
<dbReference type="EMBL" id="AY339508">
    <property type="protein sequence ID" value="AAP90418.1"/>
    <property type="molecule type" value="Genomic_DNA"/>
</dbReference>
<dbReference type="EMBL" id="AY339509">
    <property type="protein sequence ID" value="AAP90431.1"/>
    <property type="molecule type" value="Genomic_DNA"/>
</dbReference>
<dbReference type="EMBL" id="AY339510">
    <property type="protein sequence ID" value="AAP90444.1"/>
    <property type="molecule type" value="Genomic_DNA"/>
</dbReference>
<dbReference type="EMBL" id="AY339511">
    <property type="protein sequence ID" value="AAP90457.1"/>
    <property type="molecule type" value="Genomic_DNA"/>
</dbReference>
<dbReference type="EMBL" id="AY339512">
    <property type="protein sequence ID" value="AAP90470.1"/>
    <property type="molecule type" value="Genomic_DNA"/>
</dbReference>
<dbReference type="EMBL" id="AY339513">
    <property type="protein sequence ID" value="AAP90483.2"/>
    <property type="molecule type" value="Genomic_DNA"/>
</dbReference>
<dbReference type="EMBL" id="AY339515">
    <property type="protein sequence ID" value="AAP90509.1"/>
    <property type="molecule type" value="Genomic_DNA"/>
</dbReference>
<dbReference type="EMBL" id="AY339516">
    <property type="protein sequence ID" value="AAP90522.1"/>
    <property type="molecule type" value="Genomic_DNA"/>
</dbReference>
<dbReference type="EMBL" id="AY339517">
    <property type="protein sequence ID" value="AAP90535.1"/>
    <property type="molecule type" value="Genomic_DNA"/>
</dbReference>
<dbReference type="EMBL" id="AY339518">
    <property type="protein sequence ID" value="AAP90548.1"/>
    <property type="molecule type" value="Genomic_DNA"/>
</dbReference>
<dbReference type="EMBL" id="AY339519">
    <property type="protein sequence ID" value="AAP90561.1"/>
    <property type="molecule type" value="Genomic_DNA"/>
</dbReference>
<dbReference type="EMBL" id="AY339520">
    <property type="protein sequence ID" value="AAP90574.1"/>
    <property type="molecule type" value="Genomic_DNA"/>
</dbReference>
<dbReference type="EMBL" id="AY339521">
    <property type="protein sequence ID" value="AAP90587.1"/>
    <property type="molecule type" value="Genomic_DNA"/>
</dbReference>
<dbReference type="EMBL" id="AY339522">
    <property type="protein sequence ID" value="AAP90600.1"/>
    <property type="molecule type" value="Genomic_DNA"/>
</dbReference>
<dbReference type="EMBL" id="AY339523">
    <property type="protein sequence ID" value="AAP90613.1"/>
    <property type="molecule type" value="Genomic_DNA"/>
</dbReference>
<dbReference type="EMBL" id="AY339524">
    <property type="protein sequence ID" value="AAP90626.1"/>
    <property type="molecule type" value="Genomic_DNA"/>
</dbReference>
<dbReference type="EMBL" id="AY339525">
    <property type="protein sequence ID" value="AAP90639.1"/>
    <property type="molecule type" value="Genomic_DNA"/>
</dbReference>
<dbReference type="EMBL" id="AY339526">
    <property type="protein sequence ID" value="AAP90652.1"/>
    <property type="molecule type" value="Genomic_DNA"/>
</dbReference>
<dbReference type="EMBL" id="AY339527">
    <property type="protein sequence ID" value="AAP90665.1"/>
    <property type="molecule type" value="Genomic_DNA"/>
</dbReference>
<dbReference type="EMBL" id="AY339528">
    <property type="protein sequence ID" value="AAP90678.1"/>
    <property type="molecule type" value="Genomic_DNA"/>
</dbReference>
<dbReference type="EMBL" id="AY339529">
    <property type="protein sequence ID" value="AAP90691.1"/>
    <property type="molecule type" value="Genomic_DNA"/>
</dbReference>
<dbReference type="EMBL" id="AY339530">
    <property type="protein sequence ID" value="AAP90704.1"/>
    <property type="molecule type" value="Genomic_DNA"/>
</dbReference>
<dbReference type="EMBL" id="AY339531">
    <property type="protein sequence ID" value="AAP90717.1"/>
    <property type="molecule type" value="Genomic_DNA"/>
</dbReference>
<dbReference type="EMBL" id="AY339532">
    <property type="protein sequence ID" value="AAP90730.1"/>
    <property type="molecule type" value="Genomic_DNA"/>
</dbReference>
<dbReference type="EMBL" id="AY339533">
    <property type="protein sequence ID" value="AAP90743.1"/>
    <property type="molecule type" value="Genomic_DNA"/>
</dbReference>
<dbReference type="EMBL" id="AY339534">
    <property type="protein sequence ID" value="AAP90756.1"/>
    <property type="molecule type" value="Genomic_DNA"/>
</dbReference>
<dbReference type="EMBL" id="AY339535">
    <property type="protein sequence ID" value="AAP90769.1"/>
    <property type="molecule type" value="Genomic_DNA"/>
</dbReference>
<dbReference type="EMBL" id="AY339536">
    <property type="protein sequence ID" value="AAP90782.1"/>
    <property type="molecule type" value="Genomic_DNA"/>
</dbReference>
<dbReference type="EMBL" id="AY339537">
    <property type="protein sequence ID" value="AAP90795.1"/>
    <property type="molecule type" value="Genomic_DNA"/>
</dbReference>
<dbReference type="EMBL" id="AY339538">
    <property type="protein sequence ID" value="AAP90808.1"/>
    <property type="molecule type" value="Genomic_DNA"/>
</dbReference>
<dbReference type="EMBL" id="AY339539">
    <property type="protein sequence ID" value="AAP90821.1"/>
    <property type="molecule type" value="Genomic_DNA"/>
</dbReference>
<dbReference type="EMBL" id="AY339540">
    <property type="protein sequence ID" value="AAP90834.1"/>
    <property type="molecule type" value="Genomic_DNA"/>
</dbReference>
<dbReference type="EMBL" id="AY339541">
    <property type="protein sequence ID" value="AAP90847.1"/>
    <property type="molecule type" value="Genomic_DNA"/>
</dbReference>
<dbReference type="EMBL" id="AY339542">
    <property type="protein sequence ID" value="AAP90860.1"/>
    <property type="molecule type" value="Genomic_DNA"/>
</dbReference>
<dbReference type="EMBL" id="AY339543">
    <property type="protein sequence ID" value="AAP90873.1"/>
    <property type="molecule type" value="Genomic_DNA"/>
</dbReference>
<dbReference type="EMBL" id="AY339544">
    <property type="protein sequence ID" value="AAP90886.1"/>
    <property type="molecule type" value="Genomic_DNA"/>
</dbReference>
<dbReference type="EMBL" id="AY339545">
    <property type="protein sequence ID" value="AAP90899.1"/>
    <property type="molecule type" value="Genomic_DNA"/>
</dbReference>
<dbReference type="EMBL" id="AY339546">
    <property type="protein sequence ID" value="AAP90912.1"/>
    <property type="molecule type" value="Genomic_DNA"/>
</dbReference>
<dbReference type="EMBL" id="AY339547">
    <property type="protein sequence ID" value="AAP90925.1"/>
    <property type="molecule type" value="Genomic_DNA"/>
</dbReference>
<dbReference type="EMBL" id="AY339548">
    <property type="protein sequence ID" value="AAP90938.1"/>
    <property type="molecule type" value="Genomic_DNA"/>
</dbReference>
<dbReference type="EMBL" id="AY339549">
    <property type="protein sequence ID" value="AAP90951.1"/>
    <property type="molecule type" value="Genomic_DNA"/>
</dbReference>
<dbReference type="EMBL" id="AY339550">
    <property type="protein sequence ID" value="AAP90964.1"/>
    <property type="molecule type" value="Genomic_DNA"/>
</dbReference>
<dbReference type="EMBL" id="AY339551">
    <property type="protein sequence ID" value="AAP90977.1"/>
    <property type="molecule type" value="Genomic_DNA"/>
</dbReference>
<dbReference type="EMBL" id="AY339552">
    <property type="protein sequence ID" value="AAP90990.1"/>
    <property type="molecule type" value="Genomic_DNA"/>
</dbReference>
<dbReference type="EMBL" id="AY339553">
    <property type="protein sequence ID" value="AAP91003.1"/>
    <property type="molecule type" value="Genomic_DNA"/>
</dbReference>
<dbReference type="EMBL" id="AY339554">
    <property type="protein sequence ID" value="AAP91016.1"/>
    <property type="molecule type" value="Genomic_DNA"/>
</dbReference>
<dbReference type="EMBL" id="AY339555">
    <property type="protein sequence ID" value="AAP91029.1"/>
    <property type="molecule type" value="Genomic_DNA"/>
</dbReference>
<dbReference type="EMBL" id="AY339556">
    <property type="protein sequence ID" value="AAP91042.1"/>
    <property type="molecule type" value="Genomic_DNA"/>
</dbReference>
<dbReference type="EMBL" id="AY339557">
    <property type="protein sequence ID" value="AAP91055.1"/>
    <property type="molecule type" value="Genomic_DNA"/>
</dbReference>
<dbReference type="EMBL" id="AY339558">
    <property type="protein sequence ID" value="AAP91068.1"/>
    <property type="molecule type" value="Genomic_DNA"/>
</dbReference>
<dbReference type="EMBL" id="AY339559">
    <property type="protein sequence ID" value="AAP91081.1"/>
    <property type="molecule type" value="Genomic_DNA"/>
</dbReference>
<dbReference type="EMBL" id="AY339560">
    <property type="protein sequence ID" value="AAP91094.1"/>
    <property type="molecule type" value="Genomic_DNA"/>
</dbReference>
<dbReference type="EMBL" id="AY339561">
    <property type="protein sequence ID" value="AAP91107.1"/>
    <property type="molecule type" value="Genomic_DNA"/>
</dbReference>
<dbReference type="EMBL" id="AY339562">
    <property type="protein sequence ID" value="AAP91120.1"/>
    <property type="molecule type" value="Genomic_DNA"/>
</dbReference>
<dbReference type="EMBL" id="AY339563">
    <property type="protein sequence ID" value="AAP91133.1"/>
    <property type="molecule type" value="Genomic_DNA"/>
</dbReference>
<dbReference type="EMBL" id="AY339564">
    <property type="protein sequence ID" value="AAP91146.1"/>
    <property type="molecule type" value="Genomic_DNA"/>
</dbReference>
<dbReference type="EMBL" id="AY339565">
    <property type="protein sequence ID" value="AAP91159.1"/>
    <property type="molecule type" value="Genomic_DNA"/>
</dbReference>
<dbReference type="EMBL" id="AY339566">
    <property type="protein sequence ID" value="AAP91172.1"/>
    <property type="molecule type" value="Genomic_DNA"/>
</dbReference>
<dbReference type="EMBL" id="AY339567">
    <property type="protein sequence ID" value="AAP91185.1"/>
    <property type="molecule type" value="Genomic_DNA"/>
</dbReference>
<dbReference type="EMBL" id="AY339568">
    <property type="protein sequence ID" value="AAP91198.1"/>
    <property type="molecule type" value="Genomic_DNA"/>
</dbReference>
<dbReference type="EMBL" id="AY339569">
    <property type="protein sequence ID" value="AAP91211.1"/>
    <property type="molecule type" value="Genomic_DNA"/>
</dbReference>
<dbReference type="EMBL" id="AY339570">
    <property type="protein sequence ID" value="AAP91224.1"/>
    <property type="molecule type" value="Genomic_DNA"/>
</dbReference>
<dbReference type="EMBL" id="AY339571">
    <property type="protein sequence ID" value="AAP91237.1"/>
    <property type="molecule type" value="Genomic_DNA"/>
</dbReference>
<dbReference type="EMBL" id="AY339572">
    <property type="protein sequence ID" value="AAP91250.1"/>
    <property type="molecule type" value="Genomic_DNA"/>
</dbReference>
<dbReference type="EMBL" id="AY339573">
    <property type="protein sequence ID" value="AAP91263.1"/>
    <property type="molecule type" value="Genomic_DNA"/>
</dbReference>
<dbReference type="EMBL" id="AY339574">
    <property type="protein sequence ID" value="AAP91276.1"/>
    <property type="molecule type" value="Genomic_DNA"/>
</dbReference>
<dbReference type="EMBL" id="AY339575">
    <property type="protein sequence ID" value="AAP91289.1"/>
    <property type="molecule type" value="Genomic_DNA"/>
</dbReference>
<dbReference type="EMBL" id="AY339576">
    <property type="protein sequence ID" value="AAP91302.1"/>
    <property type="molecule type" value="Genomic_DNA"/>
</dbReference>
<dbReference type="EMBL" id="AY339577">
    <property type="protein sequence ID" value="AAP91315.1"/>
    <property type="molecule type" value="Genomic_DNA"/>
</dbReference>
<dbReference type="EMBL" id="AY339578">
    <property type="protein sequence ID" value="AAP91328.1"/>
    <property type="molecule type" value="Genomic_DNA"/>
</dbReference>
<dbReference type="EMBL" id="AY339579">
    <property type="protein sequence ID" value="AAP91341.1"/>
    <property type="molecule type" value="Genomic_DNA"/>
</dbReference>
<dbReference type="EMBL" id="AY339580">
    <property type="protein sequence ID" value="AAP91354.1"/>
    <property type="molecule type" value="Genomic_DNA"/>
</dbReference>
<dbReference type="EMBL" id="AY339581">
    <property type="protein sequence ID" value="AAP91367.1"/>
    <property type="molecule type" value="Genomic_DNA"/>
</dbReference>
<dbReference type="EMBL" id="AY339582">
    <property type="protein sequence ID" value="AAP91380.1"/>
    <property type="molecule type" value="Genomic_DNA"/>
</dbReference>
<dbReference type="EMBL" id="AY339583">
    <property type="protein sequence ID" value="AAP91393.1"/>
    <property type="molecule type" value="Genomic_DNA"/>
</dbReference>
<dbReference type="EMBL" id="AY339584">
    <property type="protein sequence ID" value="AAP91406.1"/>
    <property type="molecule type" value="Genomic_DNA"/>
</dbReference>
<dbReference type="EMBL" id="AY339585">
    <property type="protein sequence ID" value="AAP91419.1"/>
    <property type="molecule type" value="Genomic_DNA"/>
</dbReference>
<dbReference type="EMBL" id="AY339586">
    <property type="protein sequence ID" value="AAP91432.1"/>
    <property type="molecule type" value="Genomic_DNA"/>
</dbReference>
<dbReference type="EMBL" id="AY339587">
    <property type="protein sequence ID" value="AAP91445.1"/>
    <property type="molecule type" value="Genomic_DNA"/>
</dbReference>
<dbReference type="EMBL" id="AY339588">
    <property type="protein sequence ID" value="AAP91458.1"/>
    <property type="molecule type" value="Genomic_DNA"/>
</dbReference>
<dbReference type="EMBL" id="AY339589">
    <property type="protein sequence ID" value="AAP91471.1"/>
    <property type="molecule type" value="Genomic_DNA"/>
</dbReference>
<dbReference type="EMBL" id="AY339590">
    <property type="protein sequence ID" value="AAP91484.1"/>
    <property type="molecule type" value="Genomic_DNA"/>
</dbReference>
<dbReference type="EMBL" id="AY339591">
    <property type="protein sequence ID" value="AAP91497.1"/>
    <property type="molecule type" value="Genomic_DNA"/>
</dbReference>
<dbReference type="EMBL" id="AY339592">
    <property type="protein sequence ID" value="AAP91510.1"/>
    <property type="molecule type" value="Genomic_DNA"/>
</dbReference>
<dbReference type="EMBL" id="AY339593">
    <property type="protein sequence ID" value="AAP91523.1"/>
    <property type="molecule type" value="Genomic_DNA"/>
</dbReference>
<dbReference type="EMBL" id="AF346963">
    <property type="protein sequence ID" value="AAK17211.1"/>
    <property type="molecule type" value="Genomic_DNA"/>
</dbReference>
<dbReference type="EMBL" id="AF346964">
    <property type="protein sequence ID" value="AAK17224.1"/>
    <property type="molecule type" value="Genomic_DNA"/>
</dbReference>
<dbReference type="EMBL" id="AF346965">
    <property type="protein sequence ID" value="AAK17237.1"/>
    <property type="molecule type" value="Genomic_DNA"/>
</dbReference>
<dbReference type="EMBL" id="AF346966">
    <property type="protein sequence ID" value="AAK17250.1"/>
    <property type="molecule type" value="Genomic_DNA"/>
</dbReference>
<dbReference type="EMBL" id="AF346967">
    <property type="protein sequence ID" value="AAK17263.1"/>
    <property type="molecule type" value="Genomic_DNA"/>
</dbReference>
<dbReference type="EMBL" id="AF346968">
    <property type="protein sequence ID" value="AAK17276.1"/>
    <property type="molecule type" value="Genomic_DNA"/>
</dbReference>
<dbReference type="EMBL" id="AF346969">
    <property type="protein sequence ID" value="AAK17289.1"/>
    <property type="molecule type" value="Genomic_DNA"/>
</dbReference>
<dbReference type="EMBL" id="AF346970">
    <property type="protein sequence ID" value="AAK17302.1"/>
    <property type="molecule type" value="Genomic_DNA"/>
</dbReference>
<dbReference type="EMBL" id="AF346971">
    <property type="protein sequence ID" value="AAK17315.1"/>
    <property type="molecule type" value="Genomic_DNA"/>
</dbReference>
<dbReference type="EMBL" id="AF346972">
    <property type="protein sequence ID" value="AAK17328.1"/>
    <property type="molecule type" value="Genomic_DNA"/>
</dbReference>
<dbReference type="EMBL" id="AF346973">
    <property type="protein sequence ID" value="AAK17341.1"/>
    <property type="molecule type" value="Genomic_DNA"/>
</dbReference>
<dbReference type="EMBL" id="AF346974">
    <property type="protein sequence ID" value="AAK17354.1"/>
    <property type="molecule type" value="Genomic_DNA"/>
</dbReference>
<dbReference type="EMBL" id="AF346975">
    <property type="protein sequence ID" value="AAK17367.1"/>
    <property type="molecule type" value="Genomic_DNA"/>
</dbReference>
<dbReference type="EMBL" id="AF346976">
    <property type="protein sequence ID" value="AAK17380.1"/>
    <property type="molecule type" value="Genomic_DNA"/>
</dbReference>
<dbReference type="EMBL" id="AF346977">
    <property type="protein sequence ID" value="AAK17393.1"/>
    <property type="molecule type" value="Genomic_DNA"/>
</dbReference>
<dbReference type="EMBL" id="AF346978">
    <property type="protein sequence ID" value="AAK17406.1"/>
    <property type="molecule type" value="Genomic_DNA"/>
</dbReference>
<dbReference type="EMBL" id="AF346979">
    <property type="protein sequence ID" value="AAK17419.1"/>
    <property type="molecule type" value="Genomic_DNA"/>
</dbReference>
<dbReference type="EMBL" id="AF346980">
    <property type="protein sequence ID" value="AAK17432.1"/>
    <property type="molecule type" value="Genomic_DNA"/>
</dbReference>
<dbReference type="EMBL" id="AF346981">
    <property type="protein sequence ID" value="AAK17445.1"/>
    <property type="molecule type" value="Genomic_DNA"/>
</dbReference>
<dbReference type="EMBL" id="AF346982">
    <property type="protein sequence ID" value="AAK17458.1"/>
    <property type="molecule type" value="Genomic_DNA"/>
</dbReference>
<dbReference type="EMBL" id="AF346983">
    <property type="protein sequence ID" value="AAK17471.1"/>
    <property type="molecule type" value="Genomic_DNA"/>
</dbReference>
<dbReference type="EMBL" id="AF346985">
    <property type="protein sequence ID" value="AAK17497.1"/>
    <property type="molecule type" value="Genomic_DNA"/>
</dbReference>
<dbReference type="EMBL" id="AF346986">
    <property type="protein sequence ID" value="AAK17510.1"/>
    <property type="molecule type" value="Genomic_DNA"/>
</dbReference>
<dbReference type="EMBL" id="AF346987">
    <property type="protein sequence ID" value="AAK17523.1"/>
    <property type="molecule type" value="Genomic_DNA"/>
</dbReference>
<dbReference type="EMBL" id="AF346988">
    <property type="protein sequence ID" value="AAK17536.1"/>
    <property type="molecule type" value="Genomic_DNA"/>
</dbReference>
<dbReference type="EMBL" id="AF346991">
    <property type="protein sequence ID" value="AAK17575.1"/>
    <property type="molecule type" value="Genomic_DNA"/>
</dbReference>
<dbReference type="EMBL" id="AF346992">
    <property type="protein sequence ID" value="AAK17588.1"/>
    <property type="molecule type" value="Genomic_DNA"/>
</dbReference>
<dbReference type="EMBL" id="AF346993">
    <property type="protein sequence ID" value="AAK17601.1"/>
    <property type="molecule type" value="Genomic_DNA"/>
</dbReference>
<dbReference type="EMBL" id="AF346994">
    <property type="protein sequence ID" value="AAK17614.1"/>
    <property type="molecule type" value="Genomic_DNA"/>
</dbReference>
<dbReference type="EMBL" id="AF346995">
    <property type="protein sequence ID" value="AAK17627.1"/>
    <property type="molecule type" value="Genomic_DNA"/>
</dbReference>
<dbReference type="EMBL" id="AF346996">
    <property type="protein sequence ID" value="AAK17640.1"/>
    <property type="molecule type" value="Genomic_DNA"/>
</dbReference>
<dbReference type="EMBL" id="AF346997">
    <property type="protein sequence ID" value="AAK17653.1"/>
    <property type="molecule type" value="Genomic_DNA"/>
</dbReference>
<dbReference type="EMBL" id="AF347000">
    <property type="protein sequence ID" value="AAK17692.1"/>
    <property type="molecule type" value="Genomic_DNA"/>
</dbReference>
<dbReference type="EMBL" id="AF347001">
    <property type="protein sequence ID" value="AAK17705.1"/>
    <property type="molecule type" value="Genomic_DNA"/>
</dbReference>
<dbReference type="EMBL" id="AF347002">
    <property type="protein sequence ID" value="AAK17718.1"/>
    <property type="molecule type" value="Genomic_DNA"/>
</dbReference>
<dbReference type="EMBL" id="AF347003">
    <property type="protein sequence ID" value="AAK17731.1"/>
    <property type="molecule type" value="Genomic_DNA"/>
</dbReference>
<dbReference type="EMBL" id="AF347004">
    <property type="protein sequence ID" value="AAK17744.1"/>
    <property type="molecule type" value="Genomic_DNA"/>
</dbReference>
<dbReference type="EMBL" id="AF347005">
    <property type="protein sequence ID" value="AAK17757.1"/>
    <property type="molecule type" value="Genomic_DNA"/>
</dbReference>
<dbReference type="EMBL" id="AF347006">
    <property type="protein sequence ID" value="AAK17770.1"/>
    <property type="molecule type" value="Genomic_DNA"/>
</dbReference>
<dbReference type="EMBL" id="AF347007">
    <property type="protein sequence ID" value="AAK17783.1"/>
    <property type="molecule type" value="Genomic_DNA"/>
</dbReference>
<dbReference type="EMBL" id="AF347008">
    <property type="protein sequence ID" value="AAK17796.1"/>
    <property type="molecule type" value="Genomic_DNA"/>
</dbReference>
<dbReference type="EMBL" id="AF347009">
    <property type="protein sequence ID" value="AAK17809.1"/>
    <property type="molecule type" value="Genomic_DNA"/>
</dbReference>
<dbReference type="EMBL" id="AF347011">
    <property type="protein sequence ID" value="AAK17835.1"/>
    <property type="molecule type" value="Genomic_DNA"/>
</dbReference>
<dbReference type="EMBL" id="AF347012">
    <property type="protein sequence ID" value="AAK17848.1"/>
    <property type="molecule type" value="Genomic_DNA"/>
</dbReference>
<dbReference type="EMBL" id="AF347013">
    <property type="protein sequence ID" value="AAK17861.1"/>
    <property type="molecule type" value="Genomic_DNA"/>
</dbReference>
<dbReference type="EMBL" id="AF347014">
    <property type="protein sequence ID" value="AAK17874.1"/>
    <property type="molecule type" value="Genomic_DNA"/>
</dbReference>
<dbReference type="EMBL" id="AF347015">
    <property type="protein sequence ID" value="AAK17887.1"/>
    <property type="molecule type" value="Genomic_DNA"/>
</dbReference>
<dbReference type="EMBL" id="AY289051">
    <property type="protein sequence ID" value="AAP47884.1"/>
    <property type="molecule type" value="Genomic_DNA"/>
</dbReference>
<dbReference type="EMBL" id="AY289052">
    <property type="protein sequence ID" value="AAP47897.1"/>
    <property type="molecule type" value="Genomic_DNA"/>
</dbReference>
<dbReference type="EMBL" id="AY289053">
    <property type="protein sequence ID" value="AAP47910.1"/>
    <property type="molecule type" value="Genomic_DNA"/>
</dbReference>
<dbReference type="EMBL" id="AY289056">
    <property type="protein sequence ID" value="AAP47949.1"/>
    <property type="molecule type" value="Genomic_DNA"/>
</dbReference>
<dbReference type="EMBL" id="AY289057">
    <property type="protein sequence ID" value="AAP47962.1"/>
    <property type="molecule type" value="Genomic_DNA"/>
</dbReference>
<dbReference type="EMBL" id="AY289058">
    <property type="protein sequence ID" value="AAP47975.1"/>
    <property type="molecule type" value="Genomic_DNA"/>
</dbReference>
<dbReference type="EMBL" id="AY289059">
    <property type="protein sequence ID" value="AAP47988.1"/>
    <property type="molecule type" value="Genomic_DNA"/>
</dbReference>
<dbReference type="EMBL" id="AY289060">
    <property type="protein sequence ID" value="AAP48001.1"/>
    <property type="molecule type" value="Genomic_DNA"/>
</dbReference>
<dbReference type="EMBL" id="AY289061">
    <property type="protein sequence ID" value="AAP48014.1"/>
    <property type="molecule type" value="Genomic_DNA"/>
</dbReference>
<dbReference type="EMBL" id="AY289062">
    <property type="protein sequence ID" value="AAP48027.1"/>
    <property type="molecule type" value="Genomic_DNA"/>
</dbReference>
<dbReference type="EMBL" id="AY289063">
    <property type="protein sequence ID" value="AAP48040.1"/>
    <property type="molecule type" value="Genomic_DNA"/>
</dbReference>
<dbReference type="EMBL" id="AY289064">
    <property type="protein sequence ID" value="AAP48053.1"/>
    <property type="molecule type" value="Genomic_DNA"/>
</dbReference>
<dbReference type="EMBL" id="AY289065">
    <property type="protein sequence ID" value="AAP48066.1"/>
    <property type="molecule type" value="Genomic_DNA"/>
</dbReference>
<dbReference type="EMBL" id="AY289066">
    <property type="protein sequence ID" value="AAP48079.1"/>
    <property type="molecule type" value="Genomic_DNA"/>
</dbReference>
<dbReference type="EMBL" id="AY289067">
    <property type="protein sequence ID" value="AAP48092.1"/>
    <property type="molecule type" value="Genomic_DNA"/>
</dbReference>
<dbReference type="EMBL" id="AY289068">
    <property type="protein sequence ID" value="AAP48105.1"/>
    <property type="molecule type" value="Genomic_DNA"/>
</dbReference>
<dbReference type="EMBL" id="AY289069">
    <property type="protein sequence ID" value="AAP48118.1"/>
    <property type="molecule type" value="Genomic_DNA"/>
</dbReference>
<dbReference type="EMBL" id="AY289070">
    <property type="protein sequence ID" value="AAP48131.1"/>
    <property type="molecule type" value="Genomic_DNA"/>
</dbReference>
<dbReference type="EMBL" id="AY289071">
    <property type="protein sequence ID" value="AAP48144.1"/>
    <property type="molecule type" value="Genomic_DNA"/>
</dbReference>
<dbReference type="EMBL" id="AY289072">
    <property type="protein sequence ID" value="AAP48157.1"/>
    <property type="molecule type" value="Genomic_DNA"/>
</dbReference>
<dbReference type="EMBL" id="AY289073">
    <property type="protein sequence ID" value="AAP48170.1"/>
    <property type="molecule type" value="Genomic_DNA"/>
</dbReference>
<dbReference type="EMBL" id="AY289074">
    <property type="protein sequence ID" value="AAP48183.1"/>
    <property type="molecule type" value="Genomic_DNA"/>
</dbReference>
<dbReference type="EMBL" id="AY289075">
    <property type="protein sequence ID" value="AAP48196.1"/>
    <property type="molecule type" value="Genomic_DNA"/>
</dbReference>
<dbReference type="EMBL" id="AY289076">
    <property type="protein sequence ID" value="AAP48209.1"/>
    <property type="molecule type" value="Genomic_DNA"/>
</dbReference>
<dbReference type="EMBL" id="AY289077">
    <property type="protein sequence ID" value="AAP48222.1"/>
    <property type="molecule type" value="Genomic_DNA"/>
</dbReference>
<dbReference type="EMBL" id="AY289078">
    <property type="protein sequence ID" value="AAP48235.1"/>
    <property type="molecule type" value="Genomic_DNA"/>
</dbReference>
<dbReference type="EMBL" id="AY289080">
    <property type="protein sequence ID" value="AAP48261.1"/>
    <property type="molecule type" value="Genomic_DNA"/>
</dbReference>
<dbReference type="EMBL" id="AY289081">
    <property type="protein sequence ID" value="AAP48274.1"/>
    <property type="molecule type" value="Genomic_DNA"/>
</dbReference>
<dbReference type="EMBL" id="AY289082">
    <property type="protein sequence ID" value="AAP48287.1"/>
    <property type="molecule type" value="Genomic_DNA"/>
</dbReference>
<dbReference type="EMBL" id="AY289083">
    <property type="protein sequence ID" value="AAP48300.1"/>
    <property type="molecule type" value="Genomic_DNA"/>
</dbReference>
<dbReference type="EMBL" id="AY289084">
    <property type="protein sequence ID" value="AAP48313.1"/>
    <property type="molecule type" value="Genomic_DNA"/>
</dbReference>
<dbReference type="EMBL" id="AY289085">
    <property type="protein sequence ID" value="AAP48326.1"/>
    <property type="molecule type" value="Genomic_DNA"/>
</dbReference>
<dbReference type="EMBL" id="AY289086">
    <property type="protein sequence ID" value="AAP48339.1"/>
    <property type="molecule type" value="Genomic_DNA"/>
</dbReference>
<dbReference type="EMBL" id="AY289087">
    <property type="protein sequence ID" value="AAP48352.1"/>
    <property type="molecule type" value="Genomic_DNA"/>
</dbReference>
<dbReference type="EMBL" id="AY289088">
    <property type="protein sequence ID" value="AAP48365.1"/>
    <property type="molecule type" value="Genomic_DNA"/>
</dbReference>
<dbReference type="EMBL" id="AY289089">
    <property type="protein sequence ID" value="AAP48378.1"/>
    <property type="molecule type" value="Genomic_DNA"/>
</dbReference>
<dbReference type="EMBL" id="AY289090">
    <property type="protein sequence ID" value="AAP48391.1"/>
    <property type="molecule type" value="Genomic_DNA"/>
</dbReference>
<dbReference type="EMBL" id="AY289091">
    <property type="protein sequence ID" value="AAP48404.1"/>
    <property type="molecule type" value="Genomic_DNA"/>
</dbReference>
<dbReference type="EMBL" id="AY289092">
    <property type="protein sequence ID" value="AAP48417.1"/>
    <property type="molecule type" value="Genomic_DNA"/>
</dbReference>
<dbReference type="EMBL" id="AY289093">
    <property type="protein sequence ID" value="AAP48429.1"/>
    <property type="molecule type" value="Genomic_DNA"/>
</dbReference>
<dbReference type="EMBL" id="AY289094">
    <property type="protein sequence ID" value="AAP48442.1"/>
    <property type="molecule type" value="Genomic_DNA"/>
</dbReference>
<dbReference type="EMBL" id="AY289095">
    <property type="protein sequence ID" value="AAP48455.1"/>
    <property type="molecule type" value="Genomic_DNA"/>
</dbReference>
<dbReference type="EMBL" id="AY289096">
    <property type="protein sequence ID" value="AAP48468.1"/>
    <property type="molecule type" value="Genomic_DNA"/>
</dbReference>
<dbReference type="EMBL" id="AY289097">
    <property type="protein sequence ID" value="AAP48481.1"/>
    <property type="molecule type" value="Genomic_DNA"/>
</dbReference>
<dbReference type="EMBL" id="AY289098">
    <property type="protein sequence ID" value="AAP48494.1"/>
    <property type="molecule type" value="Genomic_DNA"/>
</dbReference>
<dbReference type="EMBL" id="AY289099">
    <property type="protein sequence ID" value="AAP48507.1"/>
    <property type="molecule type" value="Genomic_DNA"/>
</dbReference>
<dbReference type="EMBL" id="AY289100">
    <property type="protein sequence ID" value="AAP48520.1"/>
    <property type="molecule type" value="Genomic_DNA"/>
</dbReference>
<dbReference type="EMBL" id="AY289101">
    <property type="protein sequence ID" value="AAP48533.1"/>
    <property type="molecule type" value="Genomic_DNA"/>
</dbReference>
<dbReference type="EMBL" id="AY289102">
    <property type="protein sequence ID" value="AAP48546.1"/>
    <property type="molecule type" value="Genomic_DNA"/>
</dbReference>
<dbReference type="EMBL" id="AY495090">
    <property type="protein sequence ID" value="AAR92500.1"/>
    <property type="molecule type" value="Genomic_DNA"/>
</dbReference>
<dbReference type="EMBL" id="AY495091">
    <property type="protein sequence ID" value="AAR92513.1"/>
    <property type="molecule type" value="Genomic_DNA"/>
</dbReference>
<dbReference type="EMBL" id="AY495092">
    <property type="protein sequence ID" value="AAR92526.1"/>
    <property type="molecule type" value="Genomic_DNA"/>
</dbReference>
<dbReference type="EMBL" id="AY495093">
    <property type="protein sequence ID" value="AAR92539.1"/>
    <property type="molecule type" value="Genomic_DNA"/>
</dbReference>
<dbReference type="EMBL" id="AY495094">
    <property type="protein sequence ID" value="AAR92552.1"/>
    <property type="molecule type" value="Genomic_DNA"/>
</dbReference>
<dbReference type="EMBL" id="AY495095">
    <property type="protein sequence ID" value="AAR92565.1"/>
    <property type="molecule type" value="Genomic_DNA"/>
</dbReference>
<dbReference type="EMBL" id="AY495096">
    <property type="protein sequence ID" value="AAR92578.1"/>
    <property type="molecule type" value="Genomic_DNA"/>
</dbReference>
<dbReference type="EMBL" id="AY495097">
    <property type="protein sequence ID" value="AAR92591.1"/>
    <property type="molecule type" value="Genomic_DNA"/>
</dbReference>
<dbReference type="EMBL" id="AY495098">
    <property type="protein sequence ID" value="AAR92604.1"/>
    <property type="molecule type" value="Genomic_DNA"/>
</dbReference>
<dbReference type="EMBL" id="AY495099">
    <property type="protein sequence ID" value="AAR92617.1"/>
    <property type="molecule type" value="Genomic_DNA"/>
</dbReference>
<dbReference type="EMBL" id="AY495100">
    <property type="protein sequence ID" value="AAR92630.1"/>
    <property type="molecule type" value="Genomic_DNA"/>
</dbReference>
<dbReference type="EMBL" id="AY495101">
    <property type="protein sequence ID" value="AAR92643.1"/>
    <property type="molecule type" value="Genomic_DNA"/>
</dbReference>
<dbReference type="EMBL" id="AY495102">
    <property type="protein sequence ID" value="AAR92656.1"/>
    <property type="molecule type" value="Genomic_DNA"/>
</dbReference>
<dbReference type="EMBL" id="AY495103">
    <property type="protein sequence ID" value="AAR92669.1"/>
    <property type="molecule type" value="Genomic_DNA"/>
</dbReference>
<dbReference type="EMBL" id="AY495104">
    <property type="protein sequence ID" value="AAR92682.1"/>
    <property type="molecule type" value="Genomic_DNA"/>
</dbReference>
<dbReference type="EMBL" id="AY495105">
    <property type="protein sequence ID" value="AAR92695.1"/>
    <property type="molecule type" value="Genomic_DNA"/>
</dbReference>
<dbReference type="EMBL" id="AY495106">
    <property type="protein sequence ID" value="AAR92708.1"/>
    <property type="molecule type" value="Genomic_DNA"/>
</dbReference>
<dbReference type="EMBL" id="AY495107">
    <property type="protein sequence ID" value="AAR92721.1"/>
    <property type="molecule type" value="Genomic_DNA"/>
</dbReference>
<dbReference type="EMBL" id="AY495108">
    <property type="protein sequence ID" value="AAR92734.1"/>
    <property type="molecule type" value="Genomic_DNA"/>
</dbReference>
<dbReference type="EMBL" id="AY495109">
    <property type="protein sequence ID" value="AAR92747.1"/>
    <property type="molecule type" value="Genomic_DNA"/>
</dbReference>
<dbReference type="EMBL" id="AY495110">
    <property type="protein sequence ID" value="AAR92760.1"/>
    <property type="molecule type" value="Genomic_DNA"/>
</dbReference>
<dbReference type="EMBL" id="AY495111">
    <property type="protein sequence ID" value="AAR92773.1"/>
    <property type="molecule type" value="Genomic_DNA"/>
</dbReference>
<dbReference type="EMBL" id="AY495112">
    <property type="protein sequence ID" value="AAR92786.1"/>
    <property type="molecule type" value="Genomic_DNA"/>
</dbReference>
<dbReference type="EMBL" id="AY495113">
    <property type="protein sequence ID" value="AAR92799.1"/>
    <property type="molecule type" value="Genomic_DNA"/>
</dbReference>
<dbReference type="EMBL" id="AY495114">
    <property type="protein sequence ID" value="AAR92812.1"/>
    <property type="molecule type" value="Genomic_DNA"/>
</dbReference>
<dbReference type="EMBL" id="AY495115">
    <property type="protein sequence ID" value="AAR92825.1"/>
    <property type="molecule type" value="Genomic_DNA"/>
</dbReference>
<dbReference type="EMBL" id="AY495116">
    <property type="protein sequence ID" value="AAR92838.1"/>
    <property type="molecule type" value="Genomic_DNA"/>
</dbReference>
<dbReference type="EMBL" id="AY495117">
    <property type="protein sequence ID" value="AAR92851.1"/>
    <property type="molecule type" value="Genomic_DNA"/>
</dbReference>
<dbReference type="EMBL" id="AY495118">
    <property type="protein sequence ID" value="AAR92864.1"/>
    <property type="molecule type" value="Genomic_DNA"/>
</dbReference>
<dbReference type="EMBL" id="AY495119">
    <property type="protein sequence ID" value="AAR92877.1"/>
    <property type="molecule type" value="Genomic_DNA"/>
</dbReference>
<dbReference type="EMBL" id="AY495120">
    <property type="protein sequence ID" value="AAR92890.1"/>
    <property type="molecule type" value="Genomic_DNA"/>
</dbReference>
<dbReference type="EMBL" id="AY495121">
    <property type="protein sequence ID" value="AAR92903.1"/>
    <property type="molecule type" value="Genomic_DNA"/>
</dbReference>
<dbReference type="EMBL" id="AY495122">
    <property type="protein sequence ID" value="AAR92916.1"/>
    <property type="molecule type" value="Genomic_DNA"/>
</dbReference>
<dbReference type="EMBL" id="AY495124">
    <property type="protein sequence ID" value="AAR92942.1"/>
    <property type="molecule type" value="Genomic_DNA"/>
</dbReference>
<dbReference type="EMBL" id="AY495125">
    <property type="protein sequence ID" value="AAR92955.1"/>
    <property type="molecule type" value="Genomic_DNA"/>
</dbReference>
<dbReference type="EMBL" id="AY495126">
    <property type="protein sequence ID" value="AAR92968.1"/>
    <property type="molecule type" value="Genomic_DNA"/>
</dbReference>
<dbReference type="EMBL" id="AY495127">
    <property type="protein sequence ID" value="AAR92981.1"/>
    <property type="molecule type" value="Genomic_DNA"/>
</dbReference>
<dbReference type="EMBL" id="AY495128">
    <property type="protein sequence ID" value="AAR92994.1"/>
    <property type="molecule type" value="Genomic_DNA"/>
</dbReference>
<dbReference type="EMBL" id="AY495129">
    <property type="protein sequence ID" value="AAR93007.1"/>
    <property type="molecule type" value="Genomic_DNA"/>
</dbReference>
<dbReference type="EMBL" id="AY495130">
    <property type="protein sequence ID" value="AAR93020.1"/>
    <property type="molecule type" value="Genomic_DNA"/>
</dbReference>
<dbReference type="EMBL" id="AY495131">
    <property type="protein sequence ID" value="AAR93033.1"/>
    <property type="molecule type" value="Genomic_DNA"/>
</dbReference>
<dbReference type="EMBL" id="AY495132">
    <property type="protein sequence ID" value="AAR93046.1"/>
    <property type="molecule type" value="Genomic_DNA"/>
</dbReference>
<dbReference type="EMBL" id="AY495133">
    <property type="protein sequence ID" value="AAR93059.1"/>
    <property type="molecule type" value="Genomic_DNA"/>
</dbReference>
<dbReference type="EMBL" id="AY495134">
    <property type="protein sequence ID" value="AAR93072.1"/>
    <property type="molecule type" value="Genomic_DNA"/>
</dbReference>
<dbReference type="EMBL" id="AY495135">
    <property type="protein sequence ID" value="AAR93085.1"/>
    <property type="molecule type" value="Genomic_DNA"/>
</dbReference>
<dbReference type="EMBL" id="AY495136">
    <property type="protein sequence ID" value="AAR93098.1"/>
    <property type="molecule type" value="Genomic_DNA"/>
</dbReference>
<dbReference type="EMBL" id="AY495137">
    <property type="protein sequence ID" value="AAR93111.1"/>
    <property type="molecule type" value="Genomic_DNA"/>
</dbReference>
<dbReference type="EMBL" id="AY495138">
    <property type="protein sequence ID" value="AAR93124.1"/>
    <property type="molecule type" value="Genomic_DNA"/>
</dbReference>
<dbReference type="EMBL" id="AY495139">
    <property type="protein sequence ID" value="AAR93137.1"/>
    <property type="molecule type" value="Genomic_DNA"/>
</dbReference>
<dbReference type="EMBL" id="AY495140">
    <property type="protein sequence ID" value="AAR93150.1"/>
    <property type="molecule type" value="Genomic_DNA"/>
</dbReference>
<dbReference type="EMBL" id="AY495141">
    <property type="protein sequence ID" value="AAR93163.1"/>
    <property type="molecule type" value="Genomic_DNA"/>
</dbReference>
<dbReference type="EMBL" id="AY495142">
    <property type="protein sequence ID" value="AAR93176.1"/>
    <property type="molecule type" value="Genomic_DNA"/>
</dbReference>
<dbReference type="EMBL" id="AY495143">
    <property type="protein sequence ID" value="AAR93189.1"/>
    <property type="molecule type" value="Genomic_DNA"/>
</dbReference>
<dbReference type="EMBL" id="AY495144">
    <property type="protein sequence ID" value="AAR93202.1"/>
    <property type="molecule type" value="Genomic_DNA"/>
</dbReference>
<dbReference type="EMBL" id="AY495145">
    <property type="protein sequence ID" value="AAR93215.1"/>
    <property type="molecule type" value="Genomic_DNA"/>
</dbReference>
<dbReference type="EMBL" id="AY495146">
    <property type="protein sequence ID" value="AAR93228.1"/>
    <property type="molecule type" value="Genomic_DNA"/>
</dbReference>
<dbReference type="EMBL" id="AY495147">
    <property type="protein sequence ID" value="AAR93241.1"/>
    <property type="molecule type" value="Genomic_DNA"/>
</dbReference>
<dbReference type="EMBL" id="AY495148">
    <property type="protein sequence ID" value="AAR93254.1"/>
    <property type="molecule type" value="Genomic_DNA"/>
</dbReference>
<dbReference type="EMBL" id="AY495149">
    <property type="protein sequence ID" value="AAR93267.1"/>
    <property type="molecule type" value="Genomic_DNA"/>
</dbReference>
<dbReference type="EMBL" id="AY495150">
    <property type="protein sequence ID" value="AAR93280.1"/>
    <property type="molecule type" value="Genomic_DNA"/>
</dbReference>
<dbReference type="EMBL" id="AY495151">
    <property type="protein sequence ID" value="AAR93293.1"/>
    <property type="molecule type" value="Genomic_DNA"/>
</dbReference>
<dbReference type="EMBL" id="AY495152">
    <property type="protein sequence ID" value="AAR93306.1"/>
    <property type="molecule type" value="Genomic_DNA"/>
</dbReference>
<dbReference type="EMBL" id="AY495153">
    <property type="protein sequence ID" value="AAR93319.1"/>
    <property type="molecule type" value="Genomic_DNA"/>
</dbReference>
<dbReference type="EMBL" id="AY495154">
    <property type="protein sequence ID" value="AAR93332.1"/>
    <property type="molecule type" value="Genomic_DNA"/>
</dbReference>
<dbReference type="EMBL" id="AY495155">
    <property type="protein sequence ID" value="AAR93345.1"/>
    <property type="molecule type" value="Genomic_DNA"/>
</dbReference>
<dbReference type="EMBL" id="AY495156">
    <property type="protein sequence ID" value="AAR93358.1"/>
    <property type="molecule type" value="Genomic_DNA"/>
</dbReference>
<dbReference type="EMBL" id="AY495157">
    <property type="protein sequence ID" value="AAR93371.1"/>
    <property type="molecule type" value="Genomic_DNA"/>
</dbReference>
<dbReference type="EMBL" id="AY495158">
    <property type="protein sequence ID" value="AAR93384.1"/>
    <property type="molecule type" value="Genomic_DNA"/>
</dbReference>
<dbReference type="EMBL" id="AY495159">
    <property type="protein sequence ID" value="AAR93397.1"/>
    <property type="molecule type" value="Genomic_DNA"/>
</dbReference>
<dbReference type="EMBL" id="AY495160">
    <property type="protein sequence ID" value="AAR93410.1"/>
    <property type="molecule type" value="Genomic_DNA"/>
</dbReference>
<dbReference type="EMBL" id="AY495161">
    <property type="protein sequence ID" value="AAR93423.1"/>
    <property type="molecule type" value="Genomic_DNA"/>
</dbReference>
<dbReference type="EMBL" id="AY495162">
    <property type="protein sequence ID" value="AAR93436.1"/>
    <property type="molecule type" value="Genomic_DNA"/>
</dbReference>
<dbReference type="EMBL" id="AY495163">
    <property type="protein sequence ID" value="AAR93449.1"/>
    <property type="molecule type" value="Genomic_DNA"/>
</dbReference>
<dbReference type="EMBL" id="AY495164">
    <property type="protein sequence ID" value="AAR93462.1"/>
    <property type="molecule type" value="Genomic_DNA"/>
</dbReference>
<dbReference type="EMBL" id="AY495165">
    <property type="protein sequence ID" value="AAR93475.1"/>
    <property type="molecule type" value="Genomic_DNA"/>
</dbReference>
<dbReference type="EMBL" id="AY495166">
    <property type="protein sequence ID" value="AAR93488.1"/>
    <property type="molecule type" value="Genomic_DNA"/>
</dbReference>
<dbReference type="EMBL" id="AY495167">
    <property type="protein sequence ID" value="AAR93501.1"/>
    <property type="molecule type" value="Genomic_DNA"/>
</dbReference>
<dbReference type="EMBL" id="AY495168">
    <property type="protein sequence ID" value="AAR93514.1"/>
    <property type="molecule type" value="Genomic_DNA"/>
</dbReference>
<dbReference type="EMBL" id="AY495169">
    <property type="protein sequence ID" value="AAR93527.1"/>
    <property type="molecule type" value="Genomic_DNA"/>
</dbReference>
<dbReference type="EMBL" id="AY495170">
    <property type="protein sequence ID" value="AAR93540.1"/>
    <property type="molecule type" value="Genomic_DNA"/>
</dbReference>
<dbReference type="EMBL" id="AY495171">
    <property type="protein sequence ID" value="AAR93553.1"/>
    <property type="molecule type" value="Genomic_DNA"/>
</dbReference>
<dbReference type="EMBL" id="AY495172">
    <property type="protein sequence ID" value="AAR93566.1"/>
    <property type="molecule type" value="Genomic_DNA"/>
</dbReference>
<dbReference type="EMBL" id="AY495173">
    <property type="protein sequence ID" value="AAR93579.1"/>
    <property type="molecule type" value="Genomic_DNA"/>
</dbReference>
<dbReference type="EMBL" id="AY495174">
    <property type="protein sequence ID" value="AAR93592.1"/>
    <property type="molecule type" value="Genomic_DNA"/>
</dbReference>
<dbReference type="EMBL" id="AY495175">
    <property type="protein sequence ID" value="AAR93605.1"/>
    <property type="molecule type" value="Genomic_DNA"/>
</dbReference>
<dbReference type="EMBL" id="AY495176">
    <property type="protein sequence ID" value="AAR93618.1"/>
    <property type="molecule type" value="Genomic_DNA"/>
</dbReference>
<dbReference type="EMBL" id="AY495177">
    <property type="protein sequence ID" value="AAR93631.1"/>
    <property type="molecule type" value="Genomic_DNA"/>
</dbReference>
<dbReference type="EMBL" id="AY495178">
    <property type="protein sequence ID" value="AAR93644.1"/>
    <property type="molecule type" value="Genomic_DNA"/>
</dbReference>
<dbReference type="EMBL" id="AY495179">
    <property type="protein sequence ID" value="AAR93657.1"/>
    <property type="molecule type" value="Genomic_DNA"/>
</dbReference>
<dbReference type="EMBL" id="AY495180">
    <property type="protein sequence ID" value="AAR93670.1"/>
    <property type="molecule type" value="Genomic_DNA"/>
</dbReference>
<dbReference type="EMBL" id="AY495181">
    <property type="protein sequence ID" value="AAR93683.1"/>
    <property type="molecule type" value="Genomic_DNA"/>
</dbReference>
<dbReference type="EMBL" id="AY495182">
    <property type="protein sequence ID" value="AAR93696.1"/>
    <property type="molecule type" value="Genomic_DNA"/>
</dbReference>
<dbReference type="EMBL" id="AY495183">
    <property type="protein sequence ID" value="AAR93709.1"/>
    <property type="molecule type" value="Genomic_DNA"/>
</dbReference>
<dbReference type="EMBL" id="AY495184">
    <property type="protein sequence ID" value="AAR93722.1"/>
    <property type="molecule type" value="Genomic_DNA"/>
</dbReference>
<dbReference type="EMBL" id="AY495185">
    <property type="protein sequence ID" value="AAR93735.1"/>
    <property type="molecule type" value="Genomic_DNA"/>
</dbReference>
<dbReference type="EMBL" id="AY495186">
    <property type="protein sequence ID" value="AAR93748.1"/>
    <property type="molecule type" value="Genomic_DNA"/>
</dbReference>
<dbReference type="EMBL" id="AY495187">
    <property type="protein sequence ID" value="AAR93761.1"/>
    <property type="molecule type" value="Genomic_DNA"/>
</dbReference>
<dbReference type="EMBL" id="AY495188">
    <property type="protein sequence ID" value="AAR93774.1"/>
    <property type="molecule type" value="Genomic_DNA"/>
</dbReference>
<dbReference type="EMBL" id="AY495189">
    <property type="protein sequence ID" value="AAR93787.1"/>
    <property type="molecule type" value="Genomic_DNA"/>
</dbReference>
<dbReference type="EMBL" id="AY495190">
    <property type="protein sequence ID" value="AAR93800.1"/>
    <property type="molecule type" value="Genomic_DNA"/>
</dbReference>
<dbReference type="EMBL" id="AY495191">
    <property type="protein sequence ID" value="AAR93813.1"/>
    <property type="molecule type" value="Genomic_DNA"/>
</dbReference>
<dbReference type="EMBL" id="AY495192">
    <property type="protein sequence ID" value="AAR93826.1"/>
    <property type="molecule type" value="Genomic_DNA"/>
</dbReference>
<dbReference type="EMBL" id="AY495193">
    <property type="protein sequence ID" value="AAR93839.1"/>
    <property type="molecule type" value="Genomic_DNA"/>
</dbReference>
<dbReference type="EMBL" id="AY495194">
    <property type="protein sequence ID" value="AAR93852.1"/>
    <property type="molecule type" value="Genomic_DNA"/>
</dbReference>
<dbReference type="EMBL" id="AY495195">
    <property type="protein sequence ID" value="AAR93865.1"/>
    <property type="molecule type" value="Genomic_DNA"/>
</dbReference>
<dbReference type="EMBL" id="AY495196">
    <property type="protein sequence ID" value="AAR93878.1"/>
    <property type="molecule type" value="Genomic_DNA"/>
</dbReference>
<dbReference type="EMBL" id="AY495197">
    <property type="protein sequence ID" value="AAR93891.1"/>
    <property type="molecule type" value="Genomic_DNA"/>
</dbReference>
<dbReference type="EMBL" id="AY495198">
    <property type="protein sequence ID" value="AAR93904.1"/>
    <property type="molecule type" value="Genomic_DNA"/>
</dbReference>
<dbReference type="EMBL" id="AY495199">
    <property type="protein sequence ID" value="AAR93917.1"/>
    <property type="molecule type" value="Genomic_DNA"/>
</dbReference>
<dbReference type="EMBL" id="AY495200">
    <property type="protein sequence ID" value="AAR93930.1"/>
    <property type="molecule type" value="Genomic_DNA"/>
</dbReference>
<dbReference type="EMBL" id="AY495201">
    <property type="protein sequence ID" value="AAR93943.1"/>
    <property type="molecule type" value="Genomic_DNA"/>
</dbReference>
<dbReference type="EMBL" id="AY495202">
    <property type="protein sequence ID" value="AAR93956.1"/>
    <property type="molecule type" value="Genomic_DNA"/>
</dbReference>
<dbReference type="EMBL" id="AY495203">
    <property type="protein sequence ID" value="AAR93969.1"/>
    <property type="molecule type" value="Genomic_DNA"/>
</dbReference>
<dbReference type="EMBL" id="AY495204">
    <property type="protein sequence ID" value="AAR93982.1"/>
    <property type="molecule type" value="Genomic_DNA"/>
</dbReference>
<dbReference type="EMBL" id="AY495205">
    <property type="protein sequence ID" value="AAR93995.1"/>
    <property type="molecule type" value="Genomic_DNA"/>
</dbReference>
<dbReference type="EMBL" id="AY495206">
    <property type="protein sequence ID" value="AAR94008.1"/>
    <property type="molecule type" value="Genomic_DNA"/>
</dbReference>
<dbReference type="EMBL" id="AY495207">
    <property type="protein sequence ID" value="AAR94021.1"/>
    <property type="molecule type" value="Genomic_DNA"/>
</dbReference>
<dbReference type="EMBL" id="AY495208">
    <property type="protein sequence ID" value="AAR94034.1"/>
    <property type="molecule type" value="Genomic_DNA"/>
</dbReference>
<dbReference type="EMBL" id="AY495209">
    <property type="protein sequence ID" value="AAR94047.1"/>
    <property type="molecule type" value="Genomic_DNA"/>
</dbReference>
<dbReference type="EMBL" id="AY495210">
    <property type="protein sequence ID" value="AAR94060.1"/>
    <property type="molecule type" value="Genomic_DNA"/>
</dbReference>
<dbReference type="EMBL" id="AY495211">
    <property type="protein sequence ID" value="AAR94073.1"/>
    <property type="molecule type" value="Genomic_DNA"/>
</dbReference>
<dbReference type="EMBL" id="AY495212">
    <property type="protein sequence ID" value="AAR94086.1"/>
    <property type="molecule type" value="Genomic_DNA"/>
</dbReference>
<dbReference type="EMBL" id="AY495213">
    <property type="protein sequence ID" value="AAR94099.1"/>
    <property type="molecule type" value="Genomic_DNA"/>
</dbReference>
<dbReference type="EMBL" id="AY495214">
    <property type="protein sequence ID" value="AAR94112.1"/>
    <property type="molecule type" value="Genomic_DNA"/>
</dbReference>
<dbReference type="EMBL" id="AY495215">
    <property type="protein sequence ID" value="AAR94125.1"/>
    <property type="molecule type" value="Genomic_DNA"/>
</dbReference>
<dbReference type="EMBL" id="AY495216">
    <property type="protein sequence ID" value="AAR94138.1"/>
    <property type="molecule type" value="Genomic_DNA"/>
</dbReference>
<dbReference type="EMBL" id="AY495217">
    <property type="protein sequence ID" value="AAR94151.1"/>
    <property type="molecule type" value="Genomic_DNA"/>
</dbReference>
<dbReference type="EMBL" id="AY495218">
    <property type="protein sequence ID" value="AAR94164.1"/>
    <property type="molecule type" value="Genomic_DNA"/>
</dbReference>
<dbReference type="EMBL" id="AY495219">
    <property type="protein sequence ID" value="AAR94177.1"/>
    <property type="molecule type" value="Genomic_DNA"/>
</dbReference>
<dbReference type="EMBL" id="AY495220">
    <property type="protein sequence ID" value="AAR94190.1"/>
    <property type="molecule type" value="Genomic_DNA"/>
</dbReference>
<dbReference type="EMBL" id="AY495221">
    <property type="protein sequence ID" value="AAR94203.1"/>
    <property type="molecule type" value="Genomic_DNA"/>
</dbReference>
<dbReference type="EMBL" id="AY495222">
    <property type="protein sequence ID" value="AAR94216.1"/>
    <property type="molecule type" value="Genomic_DNA"/>
</dbReference>
<dbReference type="EMBL" id="AY495223">
    <property type="protein sequence ID" value="AAR94229.1"/>
    <property type="molecule type" value="Genomic_DNA"/>
</dbReference>
<dbReference type="EMBL" id="AY495224">
    <property type="protein sequence ID" value="AAR94242.1"/>
    <property type="molecule type" value="Genomic_DNA"/>
</dbReference>
<dbReference type="EMBL" id="AY495225">
    <property type="protein sequence ID" value="AAR94255.1"/>
    <property type="molecule type" value="Genomic_DNA"/>
</dbReference>
<dbReference type="EMBL" id="AY495227">
    <property type="protein sequence ID" value="AAR94281.1"/>
    <property type="molecule type" value="Genomic_DNA"/>
</dbReference>
<dbReference type="EMBL" id="AY495228">
    <property type="protein sequence ID" value="AAR94294.1"/>
    <property type="molecule type" value="Genomic_DNA"/>
</dbReference>
<dbReference type="EMBL" id="AY495229">
    <property type="protein sequence ID" value="AAR94307.1"/>
    <property type="molecule type" value="Genomic_DNA"/>
</dbReference>
<dbReference type="EMBL" id="AY495230">
    <property type="protein sequence ID" value="AAR94320.1"/>
    <property type="molecule type" value="Genomic_DNA"/>
</dbReference>
<dbReference type="EMBL" id="AY495231">
    <property type="protein sequence ID" value="AAR94333.1"/>
    <property type="molecule type" value="Genomic_DNA"/>
</dbReference>
<dbReference type="EMBL" id="AY495232">
    <property type="protein sequence ID" value="AAR94346.1"/>
    <property type="molecule type" value="Genomic_DNA"/>
</dbReference>
<dbReference type="EMBL" id="AY495233">
    <property type="protein sequence ID" value="AAR94359.1"/>
    <property type="molecule type" value="Genomic_DNA"/>
</dbReference>
<dbReference type="EMBL" id="AY495234">
    <property type="protein sequence ID" value="AAR94372.1"/>
    <property type="molecule type" value="Genomic_DNA"/>
</dbReference>
<dbReference type="EMBL" id="AY495235">
    <property type="protein sequence ID" value="AAR94385.1"/>
    <property type="molecule type" value="Genomic_DNA"/>
</dbReference>
<dbReference type="EMBL" id="AY495236">
    <property type="protein sequence ID" value="AAR94398.1"/>
    <property type="molecule type" value="Genomic_DNA"/>
</dbReference>
<dbReference type="EMBL" id="AY495237">
    <property type="protein sequence ID" value="AAR94411.1"/>
    <property type="molecule type" value="Genomic_DNA"/>
</dbReference>
<dbReference type="EMBL" id="AY495238">
    <property type="protein sequence ID" value="AAR94424.1"/>
    <property type="molecule type" value="Genomic_DNA"/>
</dbReference>
<dbReference type="EMBL" id="AY495239">
    <property type="protein sequence ID" value="AAR94437.1"/>
    <property type="molecule type" value="Genomic_DNA"/>
</dbReference>
<dbReference type="EMBL" id="AY495240">
    <property type="protein sequence ID" value="AAR94450.1"/>
    <property type="molecule type" value="Genomic_DNA"/>
</dbReference>
<dbReference type="EMBL" id="AY495241">
    <property type="protein sequence ID" value="AAR94463.1"/>
    <property type="molecule type" value="Genomic_DNA"/>
</dbReference>
<dbReference type="EMBL" id="AY495242">
    <property type="protein sequence ID" value="AAR94476.1"/>
    <property type="molecule type" value="Genomic_DNA"/>
</dbReference>
<dbReference type="EMBL" id="AY495243">
    <property type="protein sequence ID" value="AAR94489.1"/>
    <property type="molecule type" value="Genomic_DNA"/>
</dbReference>
<dbReference type="EMBL" id="AY495244">
    <property type="protein sequence ID" value="AAR94502.1"/>
    <property type="molecule type" value="Genomic_DNA"/>
</dbReference>
<dbReference type="EMBL" id="AY495245">
    <property type="protein sequence ID" value="AAR94515.1"/>
    <property type="molecule type" value="Genomic_DNA"/>
</dbReference>
<dbReference type="EMBL" id="AY495246">
    <property type="protein sequence ID" value="AAR94528.1"/>
    <property type="molecule type" value="Genomic_DNA"/>
</dbReference>
<dbReference type="EMBL" id="AY495247">
    <property type="protein sequence ID" value="AAR94541.1"/>
    <property type="molecule type" value="Genomic_DNA"/>
</dbReference>
<dbReference type="EMBL" id="AY495248">
    <property type="protein sequence ID" value="AAR94554.1"/>
    <property type="molecule type" value="Genomic_DNA"/>
</dbReference>
<dbReference type="EMBL" id="AY495249">
    <property type="protein sequence ID" value="AAR94567.1"/>
    <property type="molecule type" value="Genomic_DNA"/>
</dbReference>
<dbReference type="EMBL" id="AY495250">
    <property type="protein sequence ID" value="AAR94580.1"/>
    <property type="molecule type" value="Genomic_DNA"/>
</dbReference>
<dbReference type="EMBL" id="AY495251">
    <property type="protein sequence ID" value="AAR94593.1"/>
    <property type="molecule type" value="Genomic_DNA"/>
</dbReference>
<dbReference type="EMBL" id="AY495252">
    <property type="protein sequence ID" value="AAR94606.1"/>
    <property type="molecule type" value="Genomic_DNA"/>
</dbReference>
<dbReference type="EMBL" id="AY495253">
    <property type="protein sequence ID" value="AAR94619.1"/>
    <property type="molecule type" value="Genomic_DNA"/>
</dbReference>
<dbReference type="EMBL" id="AY495254">
    <property type="protein sequence ID" value="AAR94632.1"/>
    <property type="molecule type" value="Genomic_DNA"/>
</dbReference>
<dbReference type="EMBL" id="AY495255">
    <property type="protein sequence ID" value="AAR94645.1"/>
    <property type="molecule type" value="Genomic_DNA"/>
</dbReference>
<dbReference type="EMBL" id="AY495256">
    <property type="protein sequence ID" value="AAR94658.1"/>
    <property type="molecule type" value="Genomic_DNA"/>
</dbReference>
<dbReference type="EMBL" id="AY495257">
    <property type="protein sequence ID" value="AAR94671.1"/>
    <property type="molecule type" value="Genomic_DNA"/>
</dbReference>
<dbReference type="EMBL" id="AY495259">
    <property type="protein sequence ID" value="AAR94697.1"/>
    <property type="molecule type" value="Genomic_DNA"/>
</dbReference>
<dbReference type="EMBL" id="AY495260">
    <property type="protein sequence ID" value="AAR94710.1"/>
    <property type="molecule type" value="Genomic_DNA"/>
</dbReference>
<dbReference type="EMBL" id="AY495261">
    <property type="protein sequence ID" value="AAR94723.1"/>
    <property type="molecule type" value="Genomic_DNA"/>
</dbReference>
<dbReference type="EMBL" id="AY495262">
    <property type="protein sequence ID" value="AAR94736.1"/>
    <property type="molecule type" value="Genomic_DNA"/>
</dbReference>
<dbReference type="EMBL" id="AY495263">
    <property type="protein sequence ID" value="AAR94749.1"/>
    <property type="molecule type" value="Genomic_DNA"/>
</dbReference>
<dbReference type="EMBL" id="AY495264">
    <property type="protein sequence ID" value="AAR94762.1"/>
    <property type="molecule type" value="Genomic_DNA"/>
</dbReference>
<dbReference type="EMBL" id="AY495265">
    <property type="protein sequence ID" value="AAR94775.1"/>
    <property type="molecule type" value="Genomic_DNA"/>
</dbReference>
<dbReference type="EMBL" id="AY495266">
    <property type="protein sequence ID" value="AAR94788.1"/>
    <property type="molecule type" value="Genomic_DNA"/>
</dbReference>
<dbReference type="EMBL" id="AY495267">
    <property type="protein sequence ID" value="AAR94801.1"/>
    <property type="molecule type" value="Genomic_DNA"/>
</dbReference>
<dbReference type="EMBL" id="AY495268">
    <property type="protein sequence ID" value="AAR94814.1"/>
    <property type="molecule type" value="Genomic_DNA"/>
</dbReference>
<dbReference type="EMBL" id="AY495269">
    <property type="protein sequence ID" value="AAR94827.1"/>
    <property type="molecule type" value="Genomic_DNA"/>
</dbReference>
<dbReference type="EMBL" id="AY495270">
    <property type="protein sequence ID" value="AAR94840.1"/>
    <property type="molecule type" value="Genomic_DNA"/>
</dbReference>
<dbReference type="EMBL" id="AY495271">
    <property type="protein sequence ID" value="AAR94853.1"/>
    <property type="molecule type" value="Genomic_DNA"/>
</dbReference>
<dbReference type="EMBL" id="AY495272">
    <property type="protein sequence ID" value="AAR94866.1"/>
    <property type="molecule type" value="Genomic_DNA"/>
</dbReference>
<dbReference type="EMBL" id="AY495273">
    <property type="protein sequence ID" value="AAR94879.1"/>
    <property type="molecule type" value="Genomic_DNA"/>
</dbReference>
<dbReference type="EMBL" id="AY495274">
    <property type="protein sequence ID" value="AAR94892.1"/>
    <property type="molecule type" value="Genomic_DNA"/>
</dbReference>
<dbReference type="EMBL" id="AY495275">
    <property type="protein sequence ID" value="AAR94905.1"/>
    <property type="molecule type" value="Genomic_DNA"/>
</dbReference>
<dbReference type="EMBL" id="AY495277">
    <property type="protein sequence ID" value="AAR94931.1"/>
    <property type="molecule type" value="Genomic_DNA"/>
</dbReference>
<dbReference type="EMBL" id="AY495278">
    <property type="protein sequence ID" value="AAR94944.1"/>
    <property type="molecule type" value="Genomic_DNA"/>
</dbReference>
<dbReference type="EMBL" id="AY495279">
    <property type="protein sequence ID" value="AAR94957.1"/>
    <property type="molecule type" value="Genomic_DNA"/>
</dbReference>
<dbReference type="EMBL" id="AY495280">
    <property type="protein sequence ID" value="AAR94970.1"/>
    <property type="molecule type" value="Genomic_DNA"/>
</dbReference>
<dbReference type="EMBL" id="AY495281">
    <property type="protein sequence ID" value="AAR94983.1"/>
    <property type="molecule type" value="Genomic_DNA"/>
</dbReference>
<dbReference type="EMBL" id="AY495282">
    <property type="protein sequence ID" value="AAR94996.1"/>
    <property type="molecule type" value="Genomic_DNA"/>
</dbReference>
<dbReference type="EMBL" id="AY495284">
    <property type="protein sequence ID" value="AAR95022.1"/>
    <property type="molecule type" value="Genomic_DNA"/>
</dbReference>
<dbReference type="EMBL" id="AY495285">
    <property type="protein sequence ID" value="AAR95035.1"/>
    <property type="molecule type" value="Genomic_DNA"/>
</dbReference>
<dbReference type="EMBL" id="AY495286">
    <property type="protein sequence ID" value="AAR95048.1"/>
    <property type="molecule type" value="Genomic_DNA"/>
</dbReference>
<dbReference type="EMBL" id="AY495287">
    <property type="protein sequence ID" value="AAR95061.1"/>
    <property type="molecule type" value="Genomic_DNA"/>
</dbReference>
<dbReference type="EMBL" id="AY495288">
    <property type="protein sequence ID" value="AAR95074.1"/>
    <property type="molecule type" value="Genomic_DNA"/>
</dbReference>
<dbReference type="EMBL" id="AY495289">
    <property type="protein sequence ID" value="AAR95087.1"/>
    <property type="molecule type" value="Genomic_DNA"/>
</dbReference>
<dbReference type="EMBL" id="AY495290">
    <property type="protein sequence ID" value="AAR95100.1"/>
    <property type="molecule type" value="Genomic_DNA"/>
</dbReference>
<dbReference type="EMBL" id="AY495291">
    <property type="protein sequence ID" value="AAR95113.1"/>
    <property type="molecule type" value="Genomic_DNA"/>
</dbReference>
<dbReference type="EMBL" id="AY495292">
    <property type="protein sequence ID" value="AAR95126.1"/>
    <property type="molecule type" value="Genomic_DNA"/>
</dbReference>
<dbReference type="EMBL" id="AY495293">
    <property type="protein sequence ID" value="AAR95139.1"/>
    <property type="molecule type" value="Genomic_DNA"/>
</dbReference>
<dbReference type="EMBL" id="AY495294">
    <property type="protein sequence ID" value="AAR95152.1"/>
    <property type="molecule type" value="Genomic_DNA"/>
</dbReference>
<dbReference type="EMBL" id="AY495295">
    <property type="protein sequence ID" value="AAR95165.1"/>
    <property type="molecule type" value="Genomic_DNA"/>
</dbReference>
<dbReference type="EMBL" id="AY495296">
    <property type="protein sequence ID" value="AAR95178.1"/>
    <property type="molecule type" value="Genomic_DNA"/>
</dbReference>
<dbReference type="EMBL" id="AY495297">
    <property type="protein sequence ID" value="AAR95191.1"/>
    <property type="molecule type" value="Genomic_DNA"/>
</dbReference>
<dbReference type="EMBL" id="AY495298">
    <property type="protein sequence ID" value="AAR95204.1"/>
    <property type="molecule type" value="Genomic_DNA"/>
</dbReference>
<dbReference type="EMBL" id="AY495299">
    <property type="protein sequence ID" value="AAR95217.1"/>
    <property type="molecule type" value="Genomic_DNA"/>
</dbReference>
<dbReference type="EMBL" id="AY495301">
    <property type="protein sequence ID" value="AAR95243.1"/>
    <property type="molecule type" value="Genomic_DNA"/>
</dbReference>
<dbReference type="EMBL" id="AY495302">
    <property type="protein sequence ID" value="AAR95256.1"/>
    <property type="molecule type" value="Genomic_DNA"/>
</dbReference>
<dbReference type="EMBL" id="AY495304">
    <property type="protein sequence ID" value="AAR95282.1"/>
    <property type="molecule type" value="Genomic_DNA"/>
</dbReference>
<dbReference type="EMBL" id="AY495305">
    <property type="protein sequence ID" value="AAR95295.1"/>
    <property type="molecule type" value="Genomic_DNA"/>
</dbReference>
<dbReference type="EMBL" id="AY495306">
    <property type="protein sequence ID" value="AAR95308.1"/>
    <property type="molecule type" value="Genomic_DNA"/>
</dbReference>
<dbReference type="EMBL" id="AY495307">
    <property type="protein sequence ID" value="AAR95321.1"/>
    <property type="molecule type" value="Genomic_DNA"/>
</dbReference>
<dbReference type="EMBL" id="AY495308">
    <property type="protein sequence ID" value="AAR95334.1"/>
    <property type="molecule type" value="Genomic_DNA"/>
</dbReference>
<dbReference type="EMBL" id="AY495309">
    <property type="protein sequence ID" value="AAR95347.1"/>
    <property type="molecule type" value="Genomic_DNA"/>
</dbReference>
<dbReference type="EMBL" id="AY495310">
    <property type="protein sequence ID" value="AAR95360.1"/>
    <property type="molecule type" value="Genomic_DNA"/>
</dbReference>
<dbReference type="EMBL" id="AY495311">
    <property type="protein sequence ID" value="AAR95373.1"/>
    <property type="molecule type" value="Genomic_DNA"/>
</dbReference>
<dbReference type="EMBL" id="AY495312">
    <property type="protein sequence ID" value="AAR95386.1"/>
    <property type="molecule type" value="Genomic_DNA"/>
</dbReference>
<dbReference type="EMBL" id="AY495313">
    <property type="protein sequence ID" value="AAR95399.1"/>
    <property type="molecule type" value="Genomic_DNA"/>
</dbReference>
<dbReference type="EMBL" id="AY495314">
    <property type="protein sequence ID" value="AAR95412.1"/>
    <property type="molecule type" value="Genomic_DNA"/>
</dbReference>
<dbReference type="EMBL" id="AY495315">
    <property type="protein sequence ID" value="AAR95425.1"/>
    <property type="molecule type" value="Genomic_DNA"/>
</dbReference>
<dbReference type="EMBL" id="AY495316">
    <property type="protein sequence ID" value="AAR95438.1"/>
    <property type="molecule type" value="Genomic_DNA"/>
</dbReference>
<dbReference type="EMBL" id="AY495317">
    <property type="protein sequence ID" value="AAR95451.1"/>
    <property type="molecule type" value="Genomic_DNA"/>
</dbReference>
<dbReference type="EMBL" id="AY495318">
    <property type="protein sequence ID" value="AAR95464.1"/>
    <property type="molecule type" value="Genomic_DNA"/>
</dbReference>
<dbReference type="EMBL" id="AY495319">
    <property type="protein sequence ID" value="AAR95477.1"/>
    <property type="molecule type" value="Genomic_DNA"/>
</dbReference>
<dbReference type="EMBL" id="AY495320">
    <property type="protein sequence ID" value="AAR95490.1"/>
    <property type="molecule type" value="Genomic_DNA"/>
</dbReference>
<dbReference type="EMBL" id="AY495322">
    <property type="protein sequence ID" value="AAR95516.1"/>
    <property type="molecule type" value="Genomic_DNA"/>
</dbReference>
<dbReference type="EMBL" id="AY495323">
    <property type="protein sequence ID" value="AAR95529.1"/>
    <property type="molecule type" value="Genomic_DNA"/>
</dbReference>
<dbReference type="EMBL" id="AY495324">
    <property type="protein sequence ID" value="AAR95542.1"/>
    <property type="molecule type" value="Genomic_DNA"/>
</dbReference>
<dbReference type="EMBL" id="AY495325">
    <property type="protein sequence ID" value="AAR95555.1"/>
    <property type="molecule type" value="Genomic_DNA"/>
</dbReference>
<dbReference type="EMBL" id="AY495326">
    <property type="protein sequence ID" value="AAR95568.1"/>
    <property type="molecule type" value="Genomic_DNA"/>
</dbReference>
<dbReference type="EMBL" id="AY495327">
    <property type="protein sequence ID" value="AAR95581.1"/>
    <property type="molecule type" value="Genomic_DNA"/>
</dbReference>
<dbReference type="EMBL" id="AY495328">
    <property type="protein sequence ID" value="AAR95594.1"/>
    <property type="molecule type" value="Genomic_DNA"/>
</dbReference>
<dbReference type="EMBL" id="AY495329">
    <property type="protein sequence ID" value="AAR95607.1"/>
    <property type="molecule type" value="Genomic_DNA"/>
</dbReference>
<dbReference type="EMBL" id="AY495330">
    <property type="protein sequence ID" value="AAR95620.1"/>
    <property type="molecule type" value="Genomic_DNA"/>
</dbReference>
<dbReference type="PIR" id="A01062">
    <property type="entry name" value="PWHU8"/>
</dbReference>
<dbReference type="RefSeq" id="YP_003024030.1">
    <property type="nucleotide sequence ID" value="NC_012920.1"/>
</dbReference>
<dbReference type="PDB" id="8H9F">
    <property type="method" value="EM"/>
    <property type="resolution" value="2.69 A"/>
    <property type="chains" value="Q=1-68"/>
</dbReference>
<dbReference type="PDB" id="8H9J">
    <property type="method" value="EM"/>
    <property type="resolution" value="3.26 A"/>
    <property type="chains" value="Q=1-68"/>
</dbReference>
<dbReference type="PDB" id="8H9M">
    <property type="method" value="EM"/>
    <property type="resolution" value="3.00 A"/>
    <property type="chains" value="Q=1-68"/>
</dbReference>
<dbReference type="PDB" id="8H9Q">
    <property type="method" value="EM"/>
    <property type="resolution" value="3.47 A"/>
    <property type="chains" value="Q=1-68"/>
</dbReference>
<dbReference type="PDB" id="8H9S">
    <property type="method" value="EM"/>
    <property type="resolution" value="2.53 A"/>
    <property type="chains" value="Q=1-68"/>
</dbReference>
<dbReference type="PDB" id="8H9T">
    <property type="method" value="EM"/>
    <property type="resolution" value="2.77 A"/>
    <property type="chains" value="Q=1-68"/>
</dbReference>
<dbReference type="PDB" id="8H9U">
    <property type="method" value="EM"/>
    <property type="resolution" value="2.61 A"/>
    <property type="chains" value="Q=1-68"/>
</dbReference>
<dbReference type="PDB" id="8H9V">
    <property type="method" value="EM"/>
    <property type="resolution" value="3.02 A"/>
    <property type="chains" value="Q=1-68"/>
</dbReference>
<dbReference type="PDB" id="8KHF">
    <property type="method" value="EM"/>
    <property type="resolution" value="3.13 A"/>
    <property type="chains" value="Q=1-68"/>
</dbReference>
<dbReference type="PDB" id="8KI3">
    <property type="method" value="EM"/>
    <property type="resolution" value="2.89 A"/>
    <property type="chains" value="Q=1-68"/>
</dbReference>
<dbReference type="PDBsum" id="8H9F"/>
<dbReference type="PDBsum" id="8H9J"/>
<dbReference type="PDBsum" id="8H9M"/>
<dbReference type="PDBsum" id="8H9Q"/>
<dbReference type="PDBsum" id="8H9S"/>
<dbReference type="PDBsum" id="8H9T"/>
<dbReference type="PDBsum" id="8H9U"/>
<dbReference type="PDBsum" id="8H9V"/>
<dbReference type="PDBsum" id="8KHF"/>
<dbReference type="PDBsum" id="8KI3"/>
<dbReference type="EMDB" id="EMD-34565"/>
<dbReference type="EMDB" id="EMD-34569"/>
<dbReference type="EMDB" id="EMD-34573"/>
<dbReference type="EMDB" id="EMD-34577"/>
<dbReference type="EMDB" id="EMD-34580"/>
<dbReference type="EMDB" id="EMD-34581"/>
<dbReference type="EMDB" id="EMD-34582"/>
<dbReference type="EMDB" id="EMD-34583"/>
<dbReference type="EMDB" id="EMD-37243"/>
<dbReference type="EMDB" id="EMD-37251"/>
<dbReference type="SMR" id="P03928"/>
<dbReference type="BioGRID" id="110613">
    <property type="interactions" value="44"/>
</dbReference>
<dbReference type="ComplexPortal" id="CPX-6151">
    <property type="entry name" value="Mitochondrial proton-transporting ATP synthase complex"/>
</dbReference>
<dbReference type="CORUM" id="P03928"/>
<dbReference type="FunCoup" id="P03928">
    <property type="interactions" value="534"/>
</dbReference>
<dbReference type="IntAct" id="P03928">
    <property type="interactions" value="41"/>
</dbReference>
<dbReference type="MINT" id="P03928"/>
<dbReference type="STRING" id="9606.ENSP00000355265"/>
<dbReference type="TCDB" id="3.A.2.1.15">
    <property type="family name" value="the h+- or na+-translocating f-type, v-type and a-type atpase (f-atpase) superfamily"/>
</dbReference>
<dbReference type="GlyGen" id="P03928">
    <property type="glycosylation" value="1 site, 1 N-linked glycan (1 site)"/>
</dbReference>
<dbReference type="iPTMnet" id="P03928"/>
<dbReference type="PhosphoSitePlus" id="P03928"/>
<dbReference type="SwissPalm" id="P03928"/>
<dbReference type="BioMuta" id="MT-ATP8"/>
<dbReference type="DMDM" id="114483"/>
<dbReference type="jPOST" id="P03928"/>
<dbReference type="MassIVE" id="P03928"/>
<dbReference type="PaxDb" id="9606-ENSP00000355265"/>
<dbReference type="PeptideAtlas" id="P03928"/>
<dbReference type="ProteomicsDB" id="51618"/>
<dbReference type="Pumba" id="P03928"/>
<dbReference type="TopDownProteomics" id="P03928"/>
<dbReference type="Antibodypedia" id="64403">
    <property type="antibodies" value="42 antibodies from 14 providers"/>
</dbReference>
<dbReference type="DNASU" id="4509"/>
<dbReference type="Ensembl" id="ENST00000361851.1">
    <property type="protein sequence ID" value="ENSP00000355265.1"/>
    <property type="gene ID" value="ENSG00000228253.1"/>
</dbReference>
<dbReference type="GeneID" id="4509"/>
<dbReference type="KEGG" id="hsa:4509"/>
<dbReference type="AGR" id="HGNC:7415"/>
<dbReference type="CTD" id="4509"/>
<dbReference type="DisGeNET" id="4509"/>
<dbReference type="GeneCards" id="MT-ATP8"/>
<dbReference type="HGNC" id="HGNC:7415">
    <property type="gene designation" value="MT-ATP8"/>
</dbReference>
<dbReference type="HPA" id="ENSG00000228253">
    <property type="expression patterns" value="Tissue enhanced (heart)"/>
</dbReference>
<dbReference type="MalaCards" id="MT-ATP8"/>
<dbReference type="MIM" id="500006">
    <property type="type" value="phenotype"/>
</dbReference>
<dbReference type="MIM" id="516070">
    <property type="type" value="gene+phenotype"/>
</dbReference>
<dbReference type="neXtProt" id="NX_P03928"/>
<dbReference type="OpenTargets" id="ENSG00000228253"/>
<dbReference type="Orphanet" id="254913">
    <property type="disease" value="Isolated ATP synthase deficiency"/>
</dbReference>
<dbReference type="Orphanet" id="480">
    <property type="disease" value="Kearns-Sayre syndrome"/>
</dbReference>
<dbReference type="Orphanet" id="397750">
    <property type="disease" value="Periodic paralysis with later-onset distal motor neuropathy"/>
</dbReference>
<dbReference type="PharmGKB" id="PA31222"/>
<dbReference type="VEuPathDB" id="HostDB:ENSG00000228253"/>
<dbReference type="eggNOG" id="ENOG502T21P">
    <property type="taxonomic scope" value="Eukaryota"/>
</dbReference>
<dbReference type="GeneTree" id="ENSGT00390000008771"/>
<dbReference type="HOGENOM" id="CLU_2811757_0_0_1"/>
<dbReference type="InParanoid" id="P03928"/>
<dbReference type="OMA" id="LDTSTWF"/>
<dbReference type="PAN-GO" id="P03928">
    <property type="GO annotations" value="1 GO annotation based on evolutionary models"/>
</dbReference>
<dbReference type="PhylomeDB" id="P03928"/>
<dbReference type="BioCyc" id="MetaCyc:HS00025-MONOMER"/>
<dbReference type="PathwayCommons" id="P03928"/>
<dbReference type="Reactome" id="R-HSA-163210">
    <property type="pathway name" value="Formation of ATP by chemiosmotic coupling"/>
</dbReference>
<dbReference type="Reactome" id="R-HSA-8949613">
    <property type="pathway name" value="Cristae formation"/>
</dbReference>
<dbReference type="SignaLink" id="P03928"/>
<dbReference type="SIGNOR" id="P03928"/>
<dbReference type="BioGRID-ORCS" id="4509">
    <property type="hits" value="0 hits in 2 CRISPR screens"/>
</dbReference>
<dbReference type="ChiTaRS" id="ATP8">
    <property type="organism name" value="human"/>
</dbReference>
<dbReference type="GeneWiki" id="MT-ATP8"/>
<dbReference type="GenomeRNAi" id="4509"/>
<dbReference type="Pharos" id="P03928">
    <property type="development level" value="Tbio"/>
</dbReference>
<dbReference type="PRO" id="PR:P03928"/>
<dbReference type="Proteomes" id="UP000005640">
    <property type="component" value="Mitochondrion MT"/>
</dbReference>
<dbReference type="RNAct" id="P03928">
    <property type="molecule type" value="protein"/>
</dbReference>
<dbReference type="Bgee" id="ENSG00000228253">
    <property type="expression patterns" value="Expressed in right hemisphere of cerebellum and 96 other cell types or tissues"/>
</dbReference>
<dbReference type="ExpressionAtlas" id="P03928">
    <property type="expression patterns" value="baseline and differential"/>
</dbReference>
<dbReference type="GO" id="GO:0005743">
    <property type="term" value="C:mitochondrial inner membrane"/>
    <property type="evidence" value="ECO:0000304"/>
    <property type="project" value="Reactome"/>
</dbReference>
<dbReference type="GO" id="GO:0005739">
    <property type="term" value="C:mitochondrion"/>
    <property type="evidence" value="ECO:0006056"/>
    <property type="project" value="FlyBase"/>
</dbReference>
<dbReference type="GO" id="GO:0045259">
    <property type="term" value="C:proton-transporting ATP synthase complex"/>
    <property type="evidence" value="ECO:0000314"/>
    <property type="project" value="UniProtKB"/>
</dbReference>
<dbReference type="GO" id="GO:0015078">
    <property type="term" value="F:proton transmembrane transporter activity"/>
    <property type="evidence" value="ECO:0007669"/>
    <property type="project" value="InterPro"/>
</dbReference>
<dbReference type="GO" id="GO:0015986">
    <property type="term" value="P:proton motive force-driven ATP synthesis"/>
    <property type="evidence" value="ECO:0000303"/>
    <property type="project" value="ComplexPortal"/>
</dbReference>
<dbReference type="GO" id="GO:0042776">
    <property type="term" value="P:proton motive force-driven mitochondrial ATP synthesis"/>
    <property type="evidence" value="ECO:0000314"/>
    <property type="project" value="UniProtKB"/>
</dbReference>
<dbReference type="InterPro" id="IPR039017">
    <property type="entry name" value="ATP8_mammal"/>
</dbReference>
<dbReference type="InterPro" id="IPR001421">
    <property type="entry name" value="ATP8_metazoa"/>
</dbReference>
<dbReference type="PANTHER" id="PTHR13722">
    <property type="entry name" value="ATP SYNTHASE PROTEIN 8"/>
    <property type="match status" value="1"/>
</dbReference>
<dbReference type="PANTHER" id="PTHR13722:SF0">
    <property type="entry name" value="ATP SYNTHASE PROTEIN 8"/>
    <property type="match status" value="1"/>
</dbReference>
<dbReference type="Pfam" id="PF00895">
    <property type="entry name" value="ATP-synt_8"/>
    <property type="match status" value="1"/>
</dbReference>
<geneLocation type="mitochondrion"/>
<protein>
    <recommendedName>
        <fullName evidence="9">ATP synthase F(0) complex subunit 8</fullName>
    </recommendedName>
    <alternativeName>
        <fullName>A6L</fullName>
    </alternativeName>
    <alternativeName>
        <fullName>F-ATPase subunit 8</fullName>
    </alternativeName>
</protein>
<gene>
    <name evidence="11" type="primary">MT-ATP8</name>
    <name type="synonym">ATP8</name>
    <name type="synonym">ATPASE8</name>
    <name type="synonym">MTATP8</name>
</gene>
<organism>
    <name type="scientific">Homo sapiens</name>
    <name type="common">Human</name>
    <dbReference type="NCBI Taxonomy" id="9606"/>
    <lineage>
        <taxon>Eukaryota</taxon>
        <taxon>Metazoa</taxon>
        <taxon>Chordata</taxon>
        <taxon>Craniata</taxon>
        <taxon>Vertebrata</taxon>
        <taxon>Euteleostomi</taxon>
        <taxon>Mammalia</taxon>
        <taxon>Eutheria</taxon>
        <taxon>Euarchontoglires</taxon>
        <taxon>Primates</taxon>
        <taxon>Haplorrhini</taxon>
        <taxon>Catarrhini</taxon>
        <taxon>Hominidae</taxon>
        <taxon>Homo</taxon>
    </lineage>
</organism>
<evidence type="ECO:0000250" key="1">
    <source>
        <dbReference type="UniProtKB" id="P03930"/>
    </source>
</evidence>
<evidence type="ECO:0000250" key="2">
    <source>
        <dbReference type="UniProtKB" id="P19483"/>
    </source>
</evidence>
<evidence type="ECO:0000255" key="3"/>
<evidence type="ECO:0000269" key="4">
    <source>
    </source>
</evidence>
<evidence type="ECO:0000269" key="5">
    <source>
    </source>
</evidence>
<evidence type="ECO:0000269" key="6">
    <source>
    </source>
</evidence>
<evidence type="ECO:0000269" key="7">
    <source>
    </source>
</evidence>
<evidence type="ECO:0000269" key="8">
    <source>
    </source>
</evidence>
<evidence type="ECO:0000305" key="9"/>
<evidence type="ECO:0000305" key="10">
    <source>
    </source>
</evidence>
<evidence type="ECO:0000312" key="11">
    <source>
        <dbReference type="HGNC" id="HGNC:7415"/>
    </source>
</evidence>
<evidence type="ECO:0007744" key="12">
    <source>
        <dbReference type="PDB" id="8H9F"/>
    </source>
</evidence>
<evidence type="ECO:0007744" key="13">
    <source>
        <dbReference type="PDB" id="8H9J"/>
    </source>
</evidence>
<evidence type="ECO:0007744" key="14">
    <source>
        <dbReference type="PDB" id="8H9M"/>
    </source>
</evidence>
<evidence type="ECO:0007744" key="15">
    <source>
        <dbReference type="PDB" id="8H9Q"/>
    </source>
</evidence>
<evidence type="ECO:0007744" key="16">
    <source>
        <dbReference type="PDB" id="8H9S"/>
    </source>
</evidence>
<evidence type="ECO:0007744" key="17">
    <source>
        <dbReference type="PDB" id="8H9T"/>
    </source>
</evidence>
<evidence type="ECO:0007744" key="18">
    <source>
        <dbReference type="PDB" id="8H9U"/>
    </source>
</evidence>
<evidence type="ECO:0007744" key="19">
    <source>
        <dbReference type="PDB" id="8H9V"/>
    </source>
</evidence>
<evidence type="ECO:0007829" key="20">
    <source>
        <dbReference type="PDB" id="8H9M"/>
    </source>
</evidence>
<evidence type="ECO:0007829" key="21">
    <source>
        <dbReference type="PDB" id="8H9V"/>
    </source>
</evidence>
<keyword id="KW-0002">3D-structure</keyword>
<keyword id="KW-0007">Acetylation</keyword>
<keyword id="KW-0066">ATP synthesis</keyword>
<keyword id="KW-0122">Cardiomyopathy</keyword>
<keyword id="KW-0138">CF(0)</keyword>
<keyword id="KW-0225">Disease variant</keyword>
<keyword id="KW-0375">Hydrogen ion transport</keyword>
<keyword id="KW-0406">Ion transport</keyword>
<keyword id="KW-0472">Membrane</keyword>
<keyword id="KW-0496">Mitochondrion</keyword>
<keyword id="KW-1274">Primary mitochondrial disease</keyword>
<keyword id="KW-1267">Proteomics identification</keyword>
<keyword id="KW-1185">Reference proteome</keyword>
<keyword id="KW-0812">Transmembrane</keyword>
<keyword id="KW-1133">Transmembrane helix</keyword>
<keyword id="KW-0813">Transport</keyword>
<name>ATP8_HUMAN</name>
<reference key="1">
    <citation type="journal article" date="1981" name="Nature">
        <title>Sequence and organization of the human mitochondrial genome.</title>
        <authorList>
            <person name="Anderson S."/>
            <person name="Bankier A.T."/>
            <person name="Barrell B.G."/>
            <person name="de Bruijn M.H.L."/>
            <person name="Coulson A.R."/>
            <person name="Drouin J."/>
            <person name="Eperon I.C."/>
            <person name="Nierlich D.P."/>
            <person name="Roe B.A."/>
            <person name="Sanger F."/>
            <person name="Schreier P.H."/>
            <person name="Smith A.J.H."/>
            <person name="Staden R."/>
            <person name="Young I.G."/>
        </authorList>
    </citation>
    <scope>NUCLEOTIDE SEQUENCE [LARGE SCALE GENOMIC DNA]</scope>
</reference>
<reference key="2">
    <citation type="journal article" date="1995" name="Proc. Natl. Acad. Sci. U.S.A.">
        <title>Recent African origin of modern humans revealed by complete sequences of hominoid mitochondrial DNAs.</title>
        <authorList>
            <person name="Horai S."/>
            <person name="Hayasaka K."/>
            <person name="Kondo R."/>
            <person name="Tsugane K."/>
            <person name="Takahata N."/>
        </authorList>
    </citation>
    <scope>NUCLEOTIDE SEQUENCE [GENOMIC DNA]</scope>
    <source>
        <tissue>Placenta</tissue>
    </source>
</reference>
<reference key="3">
    <citation type="journal article" date="2003" name="Mol. Biol. Evol.">
        <title>Lineage-specific selection in human mtDNA: lack of polymorphisms in a segment of MTND5 gene in haplogroup J.</title>
        <authorList>
            <person name="Moilanen J.S."/>
            <person name="Finnila S."/>
            <person name="Majamaa K."/>
        </authorList>
    </citation>
    <scope>NUCLEOTIDE SEQUENCE [GENOMIC DNA]</scope>
</reference>
<reference key="4">
    <citation type="journal article" date="2000" name="Nature">
        <title>Mitochondrial genome variation and the origin of modern humans.</title>
        <authorList>
            <person name="Ingman M."/>
            <person name="Kaessmann H."/>
            <person name="Paeaebo S."/>
            <person name="Gyllensten U."/>
        </authorList>
    </citation>
    <scope>NUCLEOTIDE SEQUENCE [GENOMIC DNA]</scope>
</reference>
<reference key="5">
    <citation type="journal article" date="2003" name="Genome Res.">
        <title>Mitochondrial genome variation and evolutionary history of Australian and New Guinean aborigines.</title>
        <authorList>
            <person name="Ingman M."/>
            <person name="Gyllensten U."/>
        </authorList>
    </citation>
    <scope>NUCLEOTIDE SEQUENCE [GENOMIC DNA]</scope>
</reference>
<reference key="6">
    <citation type="journal article" date="2004" name="Int. J. Legal Med.">
        <title>Single nucleotide polymorphisms over the entire mtDNA genome that increase the power of forensic testing in Caucasians.</title>
        <authorList>
            <person name="Coble M.D."/>
            <person name="Just R.S."/>
            <person name="O'Callaghan J.E."/>
            <person name="Letmanyi I.H."/>
            <person name="Peterson C.T."/>
            <person name="Irwin J.A."/>
            <person name="Parsons T.J."/>
        </authorList>
    </citation>
    <scope>NUCLEOTIDE SEQUENCE [GENOMIC DNA]</scope>
</reference>
<reference key="7">
    <citation type="journal article" date="2011" name="BMC Syst. Biol.">
        <title>Initial characterization of the human central proteome.</title>
        <authorList>
            <person name="Burkard T.R."/>
            <person name="Planyavsky M."/>
            <person name="Kaupe I."/>
            <person name="Breitwieser F.P."/>
            <person name="Buerckstuemmer T."/>
            <person name="Bennett K.L."/>
            <person name="Superti-Furga G."/>
            <person name="Colinge J."/>
        </authorList>
    </citation>
    <scope>IDENTIFICATION BY MASS SPECTROMETRY [LARGE SCALE ANALYSIS]</scope>
</reference>
<reference key="8">
    <citation type="journal article" date="2015" name="Proteomics">
        <title>N-terminome analysis of the human mitochondrial proteome.</title>
        <authorList>
            <person name="Vaca Jacome A.S."/>
            <person name="Rabilloud T."/>
            <person name="Schaeffer-Reiss C."/>
            <person name="Rompais M."/>
            <person name="Ayoub D."/>
            <person name="Lane L."/>
            <person name="Bairoch A."/>
            <person name="Van Dorsselaer A."/>
            <person name="Carapito C."/>
        </authorList>
    </citation>
    <scope>IDENTIFICATION BY MASS SPECTROMETRY [LARGE SCALE ANALYSIS]</scope>
</reference>
<reference key="9">
    <citation type="journal article" date="2020" name="J. Clin. Invest.">
        <title>PRICKLE3 linked to ATPase biogenesis manifested Leber's hereditary optic neuropathy.</title>
        <authorList>
            <person name="Yu J."/>
            <person name="Liang X."/>
            <person name="Ji Y."/>
            <person name="Ai C."/>
            <person name="Liu J."/>
            <person name="Zhu L."/>
            <person name="Nie Z."/>
            <person name="Jin X."/>
            <person name="Wang C."/>
            <person name="Zhang J."/>
            <person name="Zhao F."/>
            <person name="Mei S."/>
            <person name="Zhao X."/>
            <person name="Zhou X."/>
            <person name="Zhang M."/>
            <person name="Wang M."/>
            <person name="Huang T."/>
            <person name="Jiang P."/>
            <person name="Guan M.X."/>
        </authorList>
    </citation>
    <scope>INTERACTION WITH PRICKLE3</scope>
</reference>
<reference evidence="12 13 14 15 16 17 18 19" key="10">
    <citation type="journal article" date="2023" name="Mol. Cell">
        <title>Structure of the human ATP synthase.</title>
        <authorList>
            <person name="Lai Y."/>
            <person name="Zhang Y."/>
            <person name="Zhou S."/>
            <person name="Xu J."/>
            <person name="Du Z."/>
            <person name="Feng Z."/>
            <person name="Yu L."/>
            <person name="Zhao Z."/>
            <person name="Wang W."/>
            <person name="Tang Y."/>
            <person name="Yang X."/>
            <person name="Guddat L.W."/>
            <person name="Liu F."/>
            <person name="Gao Y."/>
            <person name="Rao Z."/>
            <person name="Gong H."/>
        </authorList>
    </citation>
    <scope>STRUCTURE BY ELECTRON MICROSCOPY (2.53 ANGSTROMS)</scope>
    <scope>DENTIFICATION OF ATP SYNTHASE COMPLEX</scope>
    <scope>FUNCTION</scope>
    <scope>TOPOLOGY</scope>
</reference>
<reference key="11">
    <citation type="journal article" date="1991" name="Hum. Genet.">
        <title>Normal variants of human mitochondrial DNA and translation products: the building of a reference data base.</title>
        <authorList>
            <person name="Marzuki S."/>
            <person name="Noer A.S."/>
            <person name="Lertrit P."/>
            <person name="Thyagarajan D."/>
            <person name="Kapsa R."/>
            <person name="Utthanaphol P."/>
            <person name="Byrne E."/>
        </authorList>
    </citation>
    <scope>VARIANTS PRO-17 AND SER-21</scope>
</reference>
<reference key="12">
    <citation type="journal article" date="1998" name="Nucleic Acids Res.">
        <title>Automating the identification of DNA variations using quality-based fluorescence re-sequencing: analysis of the human mitochondrial genome.</title>
        <authorList>
            <person name="Rieder M.J."/>
            <person name="Taylor S.L."/>
            <person name="Tobe V.O."/>
            <person name="Nickerson D.A."/>
        </authorList>
    </citation>
    <scope>VARIANT THR-28</scope>
</reference>
<reference key="13">
    <citation type="journal article" date="2009" name="J. Med. Genet.">
        <title>Infantile cardiomyopathy caused by a mutation in the overlapping region of mitochondrial ATPase 6 and 8 genes.</title>
        <authorList>
            <person name="Ware S.M."/>
            <person name="El-Hassan N."/>
            <person name="Kahler S.G."/>
            <person name="Zhang Q."/>
            <person name="Ma Y.W."/>
            <person name="Miller E."/>
            <person name="Wong B."/>
            <person name="Spicer R.L."/>
            <person name="Craigen W.J."/>
            <person name="Kozel B.A."/>
            <person name="Grange D.K."/>
            <person name="Wong L.J."/>
        </authorList>
    </citation>
    <scope>VARIANT MC5DM2 ARG-55</scope>
    <scope>INVOLVEMENT IN CMHI</scope>
    <scope>VARIANT CMHI ARG-55</scope>
</reference>